<protein>
    <recommendedName>
        <fullName>Replicase polyprotein 1ab</fullName>
        <shortName>pp1ab</shortName>
    </recommendedName>
    <alternativeName>
        <fullName>ORF1ab polyprotein</fullName>
    </alternativeName>
    <component>
        <recommendedName>
            <fullName>Non-structural protein 2</fullName>
            <shortName>nsp2</shortName>
        </recommendedName>
        <alternativeName>
            <fullName>p87</fullName>
        </alternativeName>
    </component>
    <component>
        <recommendedName>
            <fullName>Papain-like protease</fullName>
            <shortName>PL-PRO</shortName>
            <ecNumber evidence="32">3.4.19.12</ecNumber>
            <ecNumber>3.4.22.-</ecNumber>
        </recommendedName>
        <alternativeName>
            <fullName>Non-structural protein 3</fullName>
            <shortName>nsp3</shortName>
        </alternativeName>
        <alternativeName>
            <fullName>p195</fullName>
        </alternativeName>
    </component>
    <component>
        <recommendedName>
            <fullName>Non-structural protein 4</fullName>
            <shortName>nsp4</shortName>
        </recommendedName>
        <alternativeName>
            <fullName>Peptide HD2</fullName>
        </alternativeName>
        <alternativeName>
            <fullName>p41</fullName>
        </alternativeName>
    </component>
    <component>
        <recommendedName>
            <fullName>3C-like proteinase</fullName>
            <shortName>3CL-PRO</shortName>
            <shortName>3CLp</shortName>
            <ecNumber>3.4.22.-</ecNumber>
        </recommendedName>
        <alternativeName>
            <fullName>Main protease</fullName>
            <shortName>Mpro</shortName>
        </alternativeName>
        <alternativeName>
            <fullName>Non-structural protein 5</fullName>
            <shortName>nsp5</shortName>
        </alternativeName>
        <alternativeName>
            <fullName>p33</fullName>
        </alternativeName>
    </component>
    <component>
        <recommendedName>
            <fullName>Non-structural protein 6</fullName>
            <shortName>nsp6</shortName>
        </recommendedName>
        <alternativeName>
            <fullName>p34</fullName>
        </alternativeName>
    </component>
    <component>
        <recommendedName>
            <fullName>Non-structural protein 7</fullName>
            <shortName>nsp7</shortName>
        </recommendedName>
        <alternativeName>
            <fullName>p9</fullName>
        </alternativeName>
    </component>
    <component>
        <recommendedName>
            <fullName>Non-structural protein 8</fullName>
            <shortName>nsp8</shortName>
        </recommendedName>
        <alternativeName>
            <fullName>p24</fullName>
        </alternativeName>
    </component>
    <component>
        <recommendedName>
            <fullName>Viral protein genome-linked nsp9</fullName>
        </recommendedName>
        <alternativeName>
            <fullName>Non-structural protein 9</fullName>
            <shortName>nsp9</shortName>
        </alternativeName>
        <alternativeName>
            <fullName>RNA-capping enzyme subunit nsp9</fullName>
        </alternativeName>
        <alternativeName>
            <fullName>p10</fullName>
        </alternativeName>
    </component>
    <component>
        <recommendedName>
            <fullName>Non-structural protein 10</fullName>
            <shortName>nsp10</shortName>
        </recommendedName>
        <alternativeName>
            <fullName>Growth factor-like peptide</fullName>
            <shortName>GFL</shortName>
        </alternativeName>
        <alternativeName>
            <fullName>p16</fullName>
        </alternativeName>
    </component>
    <component>
        <recommendedName>
            <fullName>RNA-directed RNA polymerase nsp12</fullName>
            <shortName>Pol</shortName>
            <shortName>RdRp</shortName>
            <ecNumber>2.7.7.48</ecNumber>
            <ecNumber>2.7.7.50</ecNumber>
        </recommendedName>
        <alternativeName>
            <fullName>nsp12</fullName>
        </alternativeName>
        <alternativeName>
            <fullName>p100</fullName>
        </alternativeName>
    </component>
    <component>
        <recommendedName>
            <fullName>Helicase</fullName>
            <shortName>Hel</shortName>
            <ecNumber evidence="2">3.6.4.12</ecNumber>
            <ecNumber evidence="2">3.6.4.13</ecNumber>
        </recommendedName>
        <alternativeName>
            <fullName>nsp13</fullName>
        </alternativeName>
        <alternativeName>
            <fullName>p68</fullName>
        </alternativeName>
    </component>
    <component>
        <recommendedName>
            <fullName evidence="2">Proofreading exoribonuclease</fullName>
            <shortName>ExoN</shortName>
            <ecNumber>2.1.1.-</ecNumber>
            <ecNumber>3.1.13.-</ecNumber>
        </recommendedName>
        <alternativeName>
            <fullName evidence="2">Guanine-N7 methyltransferase</fullName>
        </alternativeName>
        <alternativeName>
            <fullName>Non-structural protein 14</fullName>
            <shortName>nsp14</shortName>
        </alternativeName>
        <alternativeName>
            <fullName>p58</fullName>
        </alternativeName>
    </component>
    <component>
        <recommendedName>
            <fullName>Uridylate-specific endoribonuclease</fullName>
            <ecNumber evidence="2">4.6.1.-</ecNumber>
        </recommendedName>
        <alternativeName>
            <fullName>NendoU</fullName>
        </alternativeName>
        <alternativeName>
            <fullName>Non-structural protein 15</fullName>
            <shortName>nsp15</shortName>
        </alternativeName>
        <alternativeName>
            <fullName>p39</fullName>
        </alternativeName>
    </component>
    <component>
        <recommendedName>
            <fullName>2'-O-methyl transferase</fullName>
            <ecNumber>2.1.1.57</ecNumber>
        </recommendedName>
        <alternativeName>
            <fullName>Non-structural protein 16</fullName>
            <shortName>nsp16</shortName>
        </alternativeName>
        <alternativeName>
            <fullName>p35</fullName>
        </alternativeName>
    </component>
</protein>
<feature type="chain" id="PRO_0000037404" description="Non-structural protein 2">
    <location>
        <begin position="1"/>
        <end position="673"/>
    </location>
</feature>
<feature type="chain" id="PRO_0000037405" description="Papain-like protease">
    <location>
        <begin position="674"/>
        <end position="2265"/>
    </location>
</feature>
<feature type="chain" id="PRO_0000037406" description="Non-structural protein 4">
    <location>
        <begin position="2266"/>
        <end position="2779"/>
    </location>
</feature>
<feature type="chain" id="PRO_0000037407" description="3C-like proteinase">
    <location>
        <begin position="2780"/>
        <end position="3086"/>
    </location>
</feature>
<feature type="chain" id="PRO_0000037408" description="Non-structural protein 6">
    <location>
        <begin position="3087"/>
        <end position="3379"/>
    </location>
</feature>
<feature type="chain" id="PRO_0000037409" description="Non-structural protein 7">
    <location>
        <begin position="3380"/>
        <end position="3462"/>
    </location>
</feature>
<feature type="chain" id="PRO_0000037410" description="Non-structural protein 8">
    <location>
        <begin position="3463"/>
        <end position="3672"/>
    </location>
</feature>
<feature type="chain" id="PRO_0000037411" description="Viral protein genome-linked nsp9">
    <location>
        <begin position="3673"/>
        <end position="3783"/>
    </location>
</feature>
<feature type="chain" id="PRO_0000037412" description="Non-structural protein 10">
    <location>
        <begin position="3784"/>
        <end position="3928"/>
    </location>
</feature>
<feature type="chain" id="PRO_0000037413" description="RNA-directed RNA polymerase nsp12">
    <location>
        <begin position="3929"/>
        <end position="4868"/>
    </location>
</feature>
<feature type="chain" id="PRO_0000037414" description="Helicase">
    <location>
        <begin position="4869"/>
        <end position="5468"/>
    </location>
</feature>
<feature type="chain" id="PRO_0000037415" description="Proofreading exoribonuclease">
    <location>
        <begin position="5469"/>
        <end position="5989"/>
    </location>
</feature>
<feature type="chain" id="PRO_0000037416" description="Uridylate-specific endoribonuclease">
    <location>
        <begin position="5990"/>
        <end position="6327"/>
    </location>
</feature>
<feature type="chain" id="PRO_0000037417" description="2'-O-methyl transferase">
    <location>
        <begin position="6328"/>
        <end position="6629"/>
    </location>
</feature>
<feature type="topological domain" description="Cytoplasmic" evidence="2">
    <location>
        <begin position="1"/>
        <end position="1750"/>
    </location>
</feature>
<feature type="transmembrane region" description="Helical" evidence="5">
    <location>
        <begin position="1751"/>
        <end position="1771"/>
    </location>
</feature>
<feature type="topological domain" description="Lumenal" evidence="2">
    <location>
        <begin position="1772"/>
        <end position="1843"/>
    </location>
</feature>
<feature type="transmembrane region" description="Helical" evidence="5">
    <location>
        <begin position="1844"/>
        <end position="1864"/>
    </location>
</feature>
<feature type="topological domain" description="Cytoplasmic" evidence="2">
    <location>
        <begin position="1865"/>
        <end position="2280"/>
    </location>
</feature>
<feature type="transmembrane region" description="Helical" evidence="5">
    <location>
        <begin position="2281"/>
        <end position="2301"/>
    </location>
</feature>
<feature type="topological domain" description="Lumenal" evidence="2">
    <location>
        <begin position="2302"/>
        <end position="2559"/>
    </location>
</feature>
<feature type="transmembrane region" description="Helical" evidence="5">
    <location>
        <begin position="2560"/>
        <end position="2580"/>
    </location>
</feature>
<feature type="topological domain" description="Cytoplasmic" evidence="2">
    <location>
        <begin position="2581"/>
        <end position="2611"/>
    </location>
</feature>
<feature type="transmembrane region" description="Helical" evidence="5">
    <location>
        <begin position="2612"/>
        <end position="2632"/>
    </location>
</feature>
<feature type="topological domain" description="Lumenal" evidence="2">
    <location>
        <begin position="2633"/>
        <end position="2643"/>
    </location>
</feature>
<feature type="transmembrane region" description="Helical" evidence="5">
    <location>
        <begin position="2644"/>
        <end position="2664"/>
    </location>
</feature>
<feature type="topological domain" description="Cytoplasmic" evidence="2">
    <location>
        <begin position="2665"/>
        <end position="3096"/>
    </location>
</feature>
<feature type="transmembrane region" description="Helical" evidence="5">
    <location>
        <begin position="3097"/>
        <end position="3117"/>
    </location>
</feature>
<feature type="topological domain" description="Lumenal" evidence="2">
    <location>
        <begin position="3118"/>
        <end position="3121"/>
    </location>
</feature>
<feature type="transmembrane region" description="Helical" evidence="5">
    <location>
        <begin position="3122"/>
        <end position="3142"/>
    </location>
</feature>
<feature type="topological domain" description="Cytoplasmic" evidence="2">
    <location>
        <begin position="3143"/>
        <end position="3151"/>
    </location>
</feature>
<feature type="transmembrane region" description="Helical" evidence="5">
    <location>
        <begin position="3152"/>
        <end position="3172"/>
    </location>
</feature>
<feature type="topological domain" description="Lumenal" evidence="2">
    <location>
        <begin position="3173"/>
        <end position="3188"/>
    </location>
</feature>
<feature type="transmembrane region" description="Helical" evidence="5">
    <location>
        <begin position="3189"/>
        <end position="3209"/>
    </location>
</feature>
<feature type="topological domain" description="Cytoplasmic" evidence="2">
    <location>
        <begin position="3210"/>
        <end position="3257"/>
    </location>
</feature>
<feature type="transmembrane region" description="Helical" evidence="5">
    <location>
        <begin position="3258"/>
        <end position="3278"/>
    </location>
</feature>
<feature type="topological domain" description="Lumenal" evidence="2">
    <location>
        <begin position="3279"/>
        <end position="3296"/>
    </location>
</feature>
<feature type="transmembrane region" description="Helical" evidence="5">
    <location>
        <begin position="3297"/>
        <end position="3317"/>
    </location>
</feature>
<feature type="topological domain" description="Cytoplasmic" evidence="2">
    <location>
        <begin position="3318"/>
        <end position="6629"/>
    </location>
</feature>
<feature type="domain" description="Ubiquitin-like 1" evidence="6">
    <location>
        <begin position="675"/>
        <end position="780"/>
    </location>
</feature>
<feature type="domain" description="Macro" evidence="8">
    <location>
        <begin position="1003"/>
        <end position="1179"/>
    </location>
</feature>
<feature type="domain" description="Ubiquitin-like 2" evidence="6">
    <location>
        <begin position="1175"/>
        <end position="1227"/>
    </location>
</feature>
<feature type="domain" description="Peptidase C16" evidence="7">
    <location>
        <begin position="1236"/>
        <end position="1497"/>
    </location>
</feature>
<feature type="domain" description="3Ecto" evidence="26">
    <location>
        <begin position="1769"/>
        <end position="1833"/>
    </location>
</feature>
<feature type="domain" description="CoV Nsp3 Y" evidence="25">
    <location>
        <begin position="1911"/>
        <end position="2263"/>
    </location>
</feature>
<feature type="domain" description="Nsp4C" evidence="12">
    <location>
        <begin position="2684"/>
        <end position="2779"/>
    </location>
</feature>
<feature type="domain" description="Peptidase C30" evidence="10">
    <location>
        <begin position="2780"/>
        <end position="3086"/>
    </location>
</feature>
<feature type="domain" description="RdRp Nsp7 cofactor" evidence="15">
    <location>
        <begin position="3380"/>
        <end position="3462"/>
    </location>
</feature>
<feature type="domain" description="RdRp Nsp8 cofactor" evidence="16">
    <location>
        <begin position="3463"/>
        <end position="3672"/>
    </location>
</feature>
<feature type="domain" description="Nsp9 ssRNA-binding" evidence="17">
    <location>
        <begin position="3673"/>
        <end position="3783"/>
    </location>
</feature>
<feature type="domain" description="ExoN/MTase coactivator" evidence="18">
    <location>
        <begin position="3785"/>
        <end position="3926"/>
    </location>
</feature>
<feature type="domain" description="NiRAN" evidence="13">
    <location>
        <begin position="3940"/>
        <end position="4198"/>
    </location>
</feature>
<feature type="domain" description="Nsp12 Interface" evidence="27">
    <location>
        <begin position="4203"/>
        <end position="4301"/>
    </location>
</feature>
<feature type="domain" description="Nsp12 RNA-dependent RNA polymerase" evidence="14">
    <location>
        <begin position="4302"/>
        <end position="4868"/>
    </location>
</feature>
<feature type="domain" description="RdRp catalytic" evidence="9">
    <location>
        <begin position="4548"/>
        <end position="4710"/>
    </location>
</feature>
<feature type="domain" description="CV ZBD" evidence="11">
    <location>
        <begin position="4869"/>
        <end position="4981"/>
    </location>
</feature>
<feature type="domain" description="(+)RNA virus helicase ATP-binding">
    <location>
        <begin position="5125"/>
        <end position="5305"/>
    </location>
</feature>
<feature type="domain" description="(+)RNA virus helicase C-terminal">
    <location>
        <begin position="5306"/>
        <end position="5477"/>
    </location>
</feature>
<feature type="domain" description="ExoN" evidence="19">
    <location>
        <begin position="5539"/>
        <end position="5753"/>
    </location>
</feature>
<feature type="domain" description="N7-MTase" evidence="20">
    <location>
        <begin position="5762"/>
        <end position="5989"/>
    </location>
</feature>
<feature type="domain" description="Nsp15 N-terminal oligomerization" evidence="23">
    <location>
        <begin position="5990"/>
        <end position="6050"/>
    </location>
</feature>
<feature type="domain" description="AV-Nsp11N/CoV-Nsp15M" evidence="24">
    <location>
        <begin position="6051"/>
        <end position="6166"/>
    </location>
</feature>
<feature type="domain" description="NendoU" evidence="22">
    <location>
        <begin position="6183"/>
        <end position="6324"/>
    </location>
</feature>
<feature type="domain" description="Nidovirus-type SAM-dependent 2'-O-MTase" evidence="21">
    <location>
        <begin position="6327"/>
        <end position="6626"/>
    </location>
</feature>
<feature type="zinc finger region" description="C4-type; degenerate" evidence="7">
    <location>
        <begin position="1353"/>
        <end position="1390"/>
    </location>
</feature>
<feature type="zinc finger region" evidence="1">
    <location>
        <begin position="3858"/>
        <end position="3878"/>
    </location>
</feature>
<feature type="zinc finger region" evidence="1">
    <location>
        <begin position="3904"/>
        <end position="3917"/>
    </location>
</feature>
<feature type="region of interest" description="Disordered" evidence="28">
    <location>
        <begin position="783"/>
        <end position="802"/>
    </location>
</feature>
<feature type="region of interest" description="HD1" evidence="2">
    <location>
        <begin position="1751"/>
        <end position="1864"/>
    </location>
</feature>
<feature type="region of interest" description="Y1" evidence="25">
    <location>
        <begin position="1911"/>
        <end position="2001"/>
    </location>
</feature>
<feature type="region of interest" description="ZF1" evidence="25">
    <location>
        <begin position="1915"/>
        <end position="1928"/>
    </location>
</feature>
<feature type="region of interest" description="ZF2" evidence="25">
    <location>
        <begin position="1961"/>
        <end position="1971"/>
    </location>
</feature>
<feature type="region of interest" description="CoV-Y" evidence="25">
    <location>
        <begin position="2002"/>
        <end position="2263"/>
    </location>
</feature>
<feature type="region of interest" description="Y2" evidence="25">
    <location>
        <begin position="2002"/>
        <end position="2104"/>
    </location>
</feature>
<feature type="region of interest" description="Y3" evidence="25">
    <location>
        <begin position="2105"/>
        <end position="2163"/>
    </location>
</feature>
<feature type="region of interest" description="Y4" evidence="25">
    <location>
        <begin position="2164"/>
        <end position="2263"/>
    </location>
</feature>
<feature type="region of interest" description="HD2" evidence="2">
    <location>
        <begin position="2281"/>
        <end position="2664"/>
    </location>
</feature>
<feature type="region of interest" description="HD3" evidence="2">
    <location>
        <begin position="3097"/>
        <end position="3317"/>
    </location>
</feature>
<feature type="region of interest" description="RdRp Fingers N-ter" evidence="14">
    <location>
        <begin position="4304"/>
        <end position="4517"/>
    </location>
</feature>
<feature type="region of interest" description="RdRp Palm N-ter" evidence="14">
    <location>
        <begin position="4518"/>
        <end position="4556"/>
    </location>
</feature>
<feature type="region of interest" description="RdRp Fingers C-ter" evidence="14">
    <location>
        <begin position="4557"/>
        <end position="4615"/>
    </location>
</feature>
<feature type="region of interest" description="RdRp Palm C-ter" evidence="14">
    <location>
        <begin position="4616"/>
        <end position="4751"/>
    </location>
</feature>
<feature type="region of interest" description="RdRp Thumb" evidence="14">
    <location>
        <begin position="4752"/>
        <end position="4868"/>
    </location>
</feature>
<feature type="region of interest" description="GpppA-binding" evidence="20">
    <location>
        <begin position="5877"/>
        <end position="5891"/>
    </location>
</feature>
<feature type="active site" description="For PL-PRO activity" evidence="7 32">
    <location>
        <position position="1274"/>
    </location>
</feature>
<feature type="active site" description="For PL-PRO activity" evidence="7 32">
    <location>
        <position position="1437"/>
    </location>
</feature>
<feature type="active site" description="For PL-PRO activity" evidence="7 32">
    <location>
        <position position="1448"/>
    </location>
</feature>
<feature type="active site" description="For 3CL-PRO activity">
    <location>
        <position position="2820"/>
    </location>
</feature>
<feature type="active site" description="For 3CL-PRO activity">
    <location>
        <position position="2922"/>
    </location>
</feature>
<feature type="active site" evidence="14">
    <location>
        <position position="4695"/>
    </location>
</feature>
<feature type="active site" evidence="14">
    <location>
        <position position="4696"/>
    </location>
</feature>
<feature type="active site" evidence="14">
    <location>
        <position position="4697"/>
    </location>
</feature>
<feature type="active site" evidence="19">
    <location>
        <position position="5557"/>
    </location>
</feature>
<feature type="active site" evidence="19">
    <location>
        <position position="5559"/>
    </location>
</feature>
<feature type="active site" evidence="19">
    <location>
        <position position="5658"/>
    </location>
</feature>
<feature type="active site" evidence="19">
    <location>
        <position position="5734"/>
    </location>
</feature>
<feature type="active site" evidence="19">
    <location>
        <position position="5739"/>
    </location>
</feature>
<feature type="active site" evidence="22">
    <location>
        <position position="6212"/>
    </location>
</feature>
<feature type="active site" evidence="22">
    <location>
        <position position="6227"/>
    </location>
</feature>
<feature type="active site" evidence="22">
    <location>
        <position position="6267"/>
    </location>
</feature>
<feature type="active site" evidence="21">
    <location>
        <position position="6371"/>
    </location>
</feature>
<feature type="active site" evidence="21">
    <location>
        <position position="6455"/>
    </location>
</feature>
<feature type="active site" evidence="21">
    <location>
        <position position="6499"/>
    </location>
</feature>
<feature type="active site" evidence="21">
    <location>
        <position position="6532"/>
    </location>
</feature>
<feature type="binding site" evidence="32">
    <location>
        <position position="1353"/>
    </location>
    <ligand>
        <name>Zn(2+)</name>
        <dbReference type="ChEBI" id="CHEBI:29105"/>
        <label>1</label>
    </ligand>
</feature>
<feature type="binding site" evidence="32">
    <location>
        <position position="1355"/>
    </location>
    <ligand>
        <name>Zn(2+)</name>
        <dbReference type="ChEBI" id="CHEBI:29105"/>
        <label>1</label>
    </ligand>
</feature>
<feature type="binding site" evidence="32">
    <location>
        <position position="1387"/>
    </location>
    <ligand>
        <name>Zn(2+)</name>
        <dbReference type="ChEBI" id="CHEBI:29105"/>
        <label>1</label>
    </ligand>
</feature>
<feature type="binding site" evidence="32">
    <location>
        <position position="1390"/>
    </location>
    <ligand>
        <name>Zn(2+)</name>
        <dbReference type="ChEBI" id="CHEBI:29105"/>
        <label>1</label>
    </ligand>
</feature>
<feature type="binding site" evidence="25">
    <location>
        <position position="1915"/>
    </location>
    <ligand>
        <name>Zn(2+)</name>
        <dbReference type="ChEBI" id="CHEBI:29105"/>
        <label>2</label>
    </ligand>
</feature>
<feature type="binding site" evidence="25">
    <location>
        <position position="1920"/>
    </location>
    <ligand>
        <name>Zn(2+)</name>
        <dbReference type="ChEBI" id="CHEBI:29105"/>
        <label>2</label>
    </ligand>
</feature>
<feature type="binding site" evidence="25">
    <location>
        <position position="1925"/>
    </location>
    <ligand>
        <name>Zn(2+)</name>
        <dbReference type="ChEBI" id="CHEBI:29105"/>
        <label>2</label>
    </ligand>
</feature>
<feature type="binding site" evidence="25">
    <location>
        <position position="1928"/>
    </location>
    <ligand>
        <name>Zn(2+)</name>
        <dbReference type="ChEBI" id="CHEBI:29105"/>
        <label>2</label>
    </ligand>
</feature>
<feature type="binding site" evidence="25">
    <location>
        <position position="1961"/>
    </location>
    <ligand>
        <name>Zn(2+)</name>
        <dbReference type="ChEBI" id="CHEBI:29105"/>
        <label>3</label>
    </ligand>
</feature>
<feature type="binding site" evidence="25">
    <location>
        <position position="1964"/>
    </location>
    <ligand>
        <name>Zn(2+)</name>
        <dbReference type="ChEBI" id="CHEBI:29105"/>
        <label>3</label>
    </ligand>
</feature>
<feature type="binding site" evidence="25">
    <location>
        <position position="1968"/>
    </location>
    <ligand>
        <name>Zn(2+)</name>
        <dbReference type="ChEBI" id="CHEBI:29105"/>
        <label>3</label>
    </ligand>
</feature>
<feature type="binding site" evidence="25">
    <location>
        <position position="1971"/>
    </location>
    <ligand>
        <name>Zn(2+)</name>
        <dbReference type="ChEBI" id="CHEBI:29105"/>
        <label>3</label>
    </ligand>
</feature>
<feature type="binding site" evidence="18">
    <location>
        <position position="3858"/>
    </location>
    <ligand>
        <name>Zn(2+)</name>
        <dbReference type="ChEBI" id="CHEBI:29105"/>
        <label>4</label>
    </ligand>
</feature>
<feature type="binding site" evidence="18">
    <location>
        <position position="3861"/>
    </location>
    <ligand>
        <name>Zn(2+)</name>
        <dbReference type="ChEBI" id="CHEBI:29105"/>
        <label>4</label>
    </ligand>
</feature>
<feature type="binding site" evidence="18">
    <location>
        <position position="3867"/>
    </location>
    <ligand>
        <name>Zn(2+)</name>
        <dbReference type="ChEBI" id="CHEBI:29105"/>
        <label>4</label>
    </ligand>
</feature>
<feature type="binding site" evidence="18">
    <location>
        <position position="3878"/>
    </location>
    <ligand>
        <name>Zn(2+)</name>
        <dbReference type="ChEBI" id="CHEBI:29105"/>
        <label>4</label>
    </ligand>
</feature>
<feature type="binding site" evidence="18">
    <location>
        <position position="3904"/>
    </location>
    <ligand>
        <name>Zn(2+)</name>
        <dbReference type="ChEBI" id="CHEBI:29105"/>
        <label>5</label>
    </ligand>
</feature>
<feature type="binding site" evidence="18">
    <location>
        <position position="3907"/>
    </location>
    <ligand>
        <name>Zn(2+)</name>
        <dbReference type="ChEBI" id="CHEBI:29105"/>
        <label>5</label>
    </ligand>
</feature>
<feature type="binding site" evidence="18">
    <location>
        <position position="3915"/>
    </location>
    <ligand>
        <name>Zn(2+)</name>
        <dbReference type="ChEBI" id="CHEBI:29105"/>
        <label>5</label>
    </ligand>
</feature>
<feature type="binding site" evidence="18">
    <location>
        <position position="3917"/>
    </location>
    <ligand>
        <name>Zn(2+)</name>
        <dbReference type="ChEBI" id="CHEBI:29105"/>
        <label>5</label>
    </ligand>
</feature>
<feature type="binding site" evidence="27">
    <location>
        <position position="4232"/>
    </location>
    <ligand>
        <name>Zn(2+)</name>
        <dbReference type="ChEBI" id="CHEBI:29105"/>
        <label>6</label>
    </ligand>
</feature>
<feature type="binding site" evidence="27">
    <location>
        <position position="4238"/>
    </location>
    <ligand>
        <name>Zn(2+)</name>
        <dbReference type="ChEBI" id="CHEBI:29105"/>
        <label>6</label>
    </ligand>
</feature>
<feature type="binding site" evidence="27">
    <location>
        <position position="4243"/>
    </location>
    <ligand>
        <name>Zn(2+)</name>
        <dbReference type="ChEBI" id="CHEBI:29105"/>
        <label>6</label>
    </ligand>
</feature>
<feature type="binding site" evidence="27">
    <location>
        <position position="4247"/>
    </location>
    <ligand>
        <name>Zn(2+)</name>
        <dbReference type="ChEBI" id="CHEBI:29105"/>
        <label>6</label>
    </ligand>
</feature>
<feature type="binding site" evidence="14">
    <location>
        <position position="4424"/>
    </location>
    <ligand>
        <name>Zn(2+)</name>
        <dbReference type="ChEBI" id="CHEBI:29105"/>
        <label>7</label>
    </ligand>
</feature>
<feature type="binding site" evidence="14">
    <location>
        <position position="4578"/>
    </location>
    <ligand>
        <name>Zn(2+)</name>
        <dbReference type="ChEBI" id="CHEBI:29105"/>
        <label>7</label>
    </ligand>
</feature>
<feature type="binding site" evidence="14">
    <location>
        <position position="4581"/>
    </location>
    <ligand>
        <name>Zn(2+)</name>
        <dbReference type="ChEBI" id="CHEBI:29105"/>
        <label>7</label>
    </ligand>
</feature>
<feature type="binding site" evidence="14">
    <location>
        <position position="4582"/>
    </location>
    <ligand>
        <name>Zn(2+)</name>
        <dbReference type="ChEBI" id="CHEBI:29105"/>
        <label>7</label>
    </ligand>
</feature>
<feature type="binding site" evidence="11">
    <location>
        <position position="4873"/>
    </location>
    <ligand>
        <name>Zn(2+)</name>
        <dbReference type="ChEBI" id="CHEBI:29105"/>
        <label>8</label>
    </ligand>
</feature>
<feature type="binding site" evidence="11">
    <location>
        <position position="4876"/>
    </location>
    <ligand>
        <name>Zn(2+)</name>
        <dbReference type="ChEBI" id="CHEBI:29105"/>
        <label>8</label>
    </ligand>
</feature>
<feature type="binding site" evidence="11">
    <location>
        <position position="4884"/>
    </location>
    <ligand>
        <name>Zn(2+)</name>
        <dbReference type="ChEBI" id="CHEBI:29105"/>
        <label>9</label>
    </ligand>
</feature>
<feature type="binding site" evidence="11">
    <location>
        <position position="4887"/>
    </location>
    <ligand>
        <name>Zn(2+)</name>
        <dbReference type="ChEBI" id="CHEBI:29105"/>
        <label>9</label>
    </ligand>
</feature>
<feature type="binding site" evidence="11">
    <location>
        <position position="4894"/>
    </location>
    <ligand>
        <name>Zn(2+)</name>
        <dbReference type="ChEBI" id="CHEBI:29105"/>
        <label>8</label>
    </ligand>
</feature>
<feature type="binding site" evidence="11">
    <location>
        <position position="4897"/>
    </location>
    <ligand>
        <name>Zn(2+)</name>
        <dbReference type="ChEBI" id="CHEBI:29105"/>
        <label>8</label>
    </ligand>
</feature>
<feature type="binding site" evidence="11">
    <location>
        <position position="4901"/>
    </location>
    <ligand>
        <name>Zn(2+)</name>
        <dbReference type="ChEBI" id="CHEBI:29105"/>
        <label>9</label>
    </ligand>
</feature>
<feature type="binding site" evidence="11">
    <location>
        <position position="4907"/>
    </location>
    <ligand>
        <name>Zn(2+)</name>
        <dbReference type="ChEBI" id="CHEBI:29105"/>
        <label>9</label>
    </ligand>
</feature>
<feature type="binding site" evidence="11">
    <location>
        <position position="4918"/>
    </location>
    <ligand>
        <name>Zn(2+)</name>
        <dbReference type="ChEBI" id="CHEBI:29105"/>
        <label>10</label>
    </ligand>
</feature>
<feature type="binding site" evidence="11">
    <location>
        <position position="4923"/>
    </location>
    <ligand>
        <name>Zn(2+)</name>
        <dbReference type="ChEBI" id="CHEBI:29105"/>
        <label>10</label>
    </ligand>
</feature>
<feature type="binding site" evidence="11">
    <location>
        <position position="4940"/>
    </location>
    <ligand>
        <name>Zn(2+)</name>
        <dbReference type="ChEBI" id="CHEBI:29105"/>
        <label>10</label>
    </ligand>
</feature>
<feature type="binding site" evidence="11">
    <location>
        <position position="4943"/>
    </location>
    <ligand>
        <name>Zn(2+)</name>
        <dbReference type="ChEBI" id="CHEBI:29105"/>
        <label>10</label>
    </ligand>
</feature>
<feature type="binding site" evidence="1">
    <location>
        <begin position="5150"/>
        <end position="5157"/>
    </location>
    <ligand>
        <name>ATP</name>
        <dbReference type="ChEBI" id="CHEBI:30616"/>
    </ligand>
</feature>
<feature type="binding site" evidence="19">
    <location>
        <position position="5674"/>
    </location>
    <ligand>
        <name>Zn(2+)</name>
        <dbReference type="ChEBI" id="CHEBI:29105"/>
        <label>11</label>
    </ligand>
</feature>
<feature type="binding site" evidence="19">
    <location>
        <position position="5676"/>
    </location>
    <ligand>
        <name>Zn(2+)</name>
        <dbReference type="ChEBI" id="CHEBI:29105"/>
        <label>11</label>
    </ligand>
</feature>
<feature type="binding site" evidence="19">
    <location>
        <position position="5692"/>
    </location>
    <ligand>
        <name>Zn(2+)</name>
        <dbReference type="ChEBI" id="CHEBI:29105"/>
        <label>11</label>
    </ligand>
</feature>
<feature type="binding site" evidence="19">
    <location>
        <position position="5695"/>
    </location>
    <ligand>
        <name>Zn(2+)</name>
        <dbReference type="ChEBI" id="CHEBI:29105"/>
        <label>11</label>
    </ligand>
</feature>
<feature type="binding site" evidence="19">
    <location>
        <position position="5723"/>
    </location>
    <ligand>
        <name>Zn(2+)</name>
        <dbReference type="ChEBI" id="CHEBI:29105"/>
        <label>12</label>
    </ligand>
</feature>
<feature type="binding site" evidence="19">
    <location>
        <position position="5727"/>
    </location>
    <ligand>
        <name>Zn(2+)</name>
        <dbReference type="ChEBI" id="CHEBI:29105"/>
        <label>12</label>
    </ligand>
</feature>
<feature type="binding site" evidence="19">
    <location>
        <position position="5730"/>
    </location>
    <ligand>
        <name>Zn(2+)</name>
        <dbReference type="ChEBI" id="CHEBI:29105"/>
        <label>12</label>
    </ligand>
</feature>
<feature type="binding site" evidence="19">
    <location>
        <position position="5745"/>
    </location>
    <ligand>
        <name>Zn(2+)</name>
        <dbReference type="ChEBI" id="CHEBI:29105"/>
        <label>12</label>
    </ligand>
</feature>
<feature type="binding site" evidence="20">
    <location>
        <begin position="5797"/>
        <end position="5803"/>
    </location>
    <ligand>
        <name>S-adenosyl-L-methionine</name>
        <dbReference type="ChEBI" id="CHEBI:59789"/>
    </ligand>
</feature>
<feature type="binding site" evidence="20">
    <location>
        <position position="5915"/>
    </location>
    <ligand>
        <name>Zn(2+)</name>
        <dbReference type="ChEBI" id="CHEBI:29105"/>
        <label>13</label>
    </ligand>
</feature>
<feature type="binding site" evidence="20">
    <location>
        <position position="5935"/>
    </location>
    <ligand>
        <name>Zn(2+)</name>
        <dbReference type="ChEBI" id="CHEBI:29105"/>
        <label>13</label>
    </ligand>
</feature>
<feature type="binding site" evidence="20">
    <location>
        <position position="5946"/>
    </location>
    <ligand>
        <name>Zn(2+)</name>
        <dbReference type="ChEBI" id="CHEBI:29105"/>
        <label>13</label>
    </ligand>
</feature>
<feature type="binding site" evidence="20">
    <location>
        <position position="5949"/>
    </location>
    <ligand>
        <name>Zn(2+)</name>
        <dbReference type="ChEBI" id="CHEBI:29105"/>
        <label>13</label>
    </ligand>
</feature>
<feature type="site" description="Cleavage; by PL-PRO" evidence="2">
    <location>
        <begin position="673"/>
        <end position="674"/>
    </location>
</feature>
<feature type="site" description="Cleavage; by PL-PRO" evidence="2">
    <location>
        <begin position="2265"/>
        <end position="2266"/>
    </location>
</feature>
<feature type="site" description="Cleavage; by 3CL-PRO" evidence="2">
    <location>
        <begin position="2779"/>
        <end position="2780"/>
    </location>
</feature>
<feature type="site" description="Cleavage; by 3CL-PRO" evidence="2">
    <location>
        <begin position="3086"/>
        <end position="3087"/>
    </location>
</feature>
<feature type="site" description="Cleavage; by 3CL-PRO" evidence="2">
    <location>
        <begin position="3379"/>
        <end position="3380"/>
    </location>
</feature>
<feature type="site" description="Cleavage; by 3CL-PRO" evidence="2">
    <location>
        <begin position="3462"/>
        <end position="3463"/>
    </location>
</feature>
<feature type="site" description="Cleavage; by 3CL-PRO" evidence="2">
    <location>
        <begin position="3672"/>
        <end position="3673"/>
    </location>
</feature>
<feature type="site" description="Cleavage; by 3CL-PRO" evidence="2">
    <location>
        <begin position="3783"/>
        <end position="3784"/>
    </location>
</feature>
<feature type="site" description="Cleavage; by 3CL-PRO" evidence="2">
    <location>
        <begin position="3928"/>
        <end position="3929"/>
    </location>
</feature>
<feature type="site" description="Cleavage; by 3CL-PRO" evidence="2">
    <location>
        <begin position="4868"/>
        <end position="4869"/>
    </location>
</feature>
<feature type="site" description="Cleavage; by 3CL-PRO" evidence="2">
    <location>
        <begin position="5468"/>
        <end position="5469"/>
    </location>
</feature>
<feature type="site" description="Cleavage; by 3CL-PRO" evidence="2">
    <location>
        <begin position="5989"/>
        <end position="5990"/>
    </location>
</feature>
<feature type="site" description="Cleavage; by 3CL-PRO" evidence="2">
    <location>
        <begin position="6327"/>
        <end position="6328"/>
    </location>
</feature>
<feature type="disulfide bond" evidence="26">
    <location>
        <begin position="1785"/>
        <end position="1811"/>
    </location>
</feature>
<feature type="disulfide bond" evidence="26">
    <location>
        <begin position="1802"/>
        <end position="1808"/>
    </location>
</feature>
<feature type="sequence variant" description="In strain: Isolate Vero cell-adapted p65.">
    <original>P</original>
    <variation>S</variation>
    <location>
        <position position="105"/>
    </location>
</feature>
<feature type="sequence variant" description="In strain: Isolate Vero cell-adapted p65.">
    <original>K</original>
    <variation>E</variation>
    <location>
        <position position="919"/>
    </location>
</feature>
<feature type="sequence variant" description="In strain: Isolate Vero cell-adapted p65.">
    <original>L</original>
    <variation>I</variation>
    <location>
        <position position="932"/>
    </location>
</feature>
<feature type="sequence variant" description="In strain: Isolate Vero cell-adapted p65.">
    <original>D</original>
    <variation>G</variation>
    <location>
        <position position="948"/>
    </location>
</feature>
<feature type="sequence variant" description="In strain: Isolate Vero cell-adapted p65.">
    <original>A</original>
    <variation>D</variation>
    <location>
        <position position="967"/>
    </location>
</feature>
<feature type="sequence variant" description="In strain: Isolate Vero cell-adapted p65.">
    <original>L</original>
    <variation>S</variation>
    <location>
        <position position="1133"/>
    </location>
</feature>
<feature type="sequence variant" description="In strain: Isolate Vero cell-adapted p65.">
    <original>P</original>
    <variation>S</variation>
    <location>
        <position position="1388"/>
    </location>
</feature>
<feature type="sequence variant" description="In strain: Isolate Vero cell-adapted p65.">
    <original>L</original>
    <variation>F</variation>
    <location>
        <position position="1753"/>
    </location>
</feature>
<feature type="sequence variant" description="In strain: Isolate Vero cell-adapted p65.">
    <original>Q</original>
    <variation>H</variation>
    <location>
        <position position="2561"/>
    </location>
</feature>
<feature type="sequence variant" description="In strain: Isolate Vero cell-adapted p65.">
    <location>
        <position position="3058"/>
    </location>
</feature>
<feature type="sequence variant" description="In strain: Isolate Vero cell-adapted p65.">
    <original>N</original>
    <variation>S</variation>
    <location>
        <position position="3242"/>
    </location>
</feature>
<feature type="sequence variant" description="In strain: Isolate Vero cell-adapted p65.">
    <original>V</original>
    <variation>A</variation>
    <location>
        <position position="3409"/>
    </location>
</feature>
<feature type="sequence variant" description="In strain: Isolate Vero cell-adapted p65.">
    <original>I</original>
    <variation>T</variation>
    <location>
        <position position="3418"/>
    </location>
</feature>
<feature type="sequence variant" description="In strain: Isolate Vero cell-adapted p65.">
    <original>IP</original>
    <variation>MT</variation>
    <location>
        <begin position="3471"/>
        <end position="3472"/>
    </location>
</feature>
<feature type="sequence variant" description="In strain: Isolate Vero cell-adapted p65.">
    <original>V</original>
    <variation>D</variation>
    <location>
        <position position="3751"/>
    </location>
</feature>
<feature type="sequence variant" description="In strain: Isolate Vero cell-adapted p65.">
    <original>S</original>
    <variation>G</variation>
    <location>
        <position position="3870"/>
    </location>
</feature>
<feature type="sequence variant" description="In strain: Isolate Vero cell-adapted p65.">
    <original>D</original>
    <variation>G</variation>
    <location>
        <position position="3935"/>
    </location>
</feature>
<feature type="sequence variant" description="In strain: Isolate Vero cell-adapted p65.">
    <original>A</original>
    <variation>V</variation>
    <location>
        <position position="5085"/>
    </location>
</feature>
<feature type="sequence variant" description="In strain: Isolate Vero cell-adapted p65.">
    <original>F</original>
    <variation>S</variation>
    <location>
        <position position="5968"/>
    </location>
</feature>
<feature type="sequence variant" description="In strain: Isolate Vero cell-adapted p65.">
    <original>P</original>
    <variation>L</variation>
    <location>
        <position position="6221"/>
    </location>
</feature>
<feature type="mutagenesis site" description="No processing between p87 and p195." evidence="36">
    <original>G</original>
    <variation>A</variation>
    <location>
        <position position="673"/>
    </location>
</feature>
<feature type="mutagenesis site" description="No effect." evidence="36">
    <original>T</original>
    <variation>S</variation>
    <location>
        <position position="676"/>
    </location>
</feature>
<feature type="mutagenesis site" description="Complete loss of PL-PRO activity." evidence="36">
    <original>C</original>
    <variation>S</variation>
    <location>
        <position position="1274"/>
    </location>
</feature>
<feature type="mutagenesis site" description="Complete loss of PL-PRO activity." evidence="36">
    <original>H</original>
    <variation>K</variation>
    <location>
        <position position="1437"/>
    </location>
</feature>
<feature type="mutagenesis site" description="Almost no processing between p195 and peptide HD2." evidence="29">
    <original>A</original>
    <variation>N</variation>
    <location>
        <position position="2264"/>
    </location>
</feature>
<feature type="mutagenesis site" description="No processing between p195 and peptide HD2.">
    <location>
        <begin position="2265"/>
        <end position="2266"/>
    </location>
</feature>
<feature type="mutagenesis site" description="No effect." evidence="29">
    <original>G</original>
    <variation>A</variation>
    <location>
        <position position="2265"/>
    </location>
</feature>
<feature type="mutagenesis site" description="Almost no processing between p195 and peptide HD2." evidence="29">
    <original>G</original>
    <variation>N</variation>
    <location>
        <position position="2265"/>
    </location>
</feature>
<feature type="mutagenesis site" description="No effect." evidence="29">
    <original>G</original>
    <variation>N</variation>
    <location>
        <position position="2266"/>
    </location>
</feature>
<feature type="mutagenesis site" description="Complete loss of 3CL-PRO activity." evidence="33">
    <original>H</original>
    <variation>K</variation>
    <variation>G</variation>
    <location>
        <position position="2820"/>
    </location>
</feature>
<feature type="mutagenesis site" description="No effect." evidence="33">
    <original>E</original>
    <variation>Q</variation>
    <location>
        <position position="2841"/>
    </location>
</feature>
<feature type="mutagenesis site" description="No effect." evidence="33">
    <original>E</original>
    <variation>D</variation>
    <variation>N</variation>
    <variation>Q</variation>
    <location>
        <position position="2843"/>
    </location>
</feature>
<feature type="mutagenesis site" description="Complete loss of 3CL-PRO activity." evidence="33">
    <original>C</original>
    <variation>A</variation>
    <location>
        <position position="2922"/>
    </location>
</feature>
<feature type="mutagenesis site" description="Partial loss of 3CL-PRO activity." evidence="33">
    <original>C</original>
    <variation>S</variation>
    <location>
        <position position="2922"/>
    </location>
</feature>
<feature type="mutagenesis site" description="No processing between 3CL-PRO and p34." evidence="30">
    <original>Q</original>
    <variation>E</variation>
    <location>
        <position position="3086"/>
    </location>
</feature>
<feature type="mutagenesis site" description="No effect." evidence="30">
    <original>Q</original>
    <variation>E</variation>
    <location>
        <position position="3365"/>
    </location>
</feature>
<feature type="mutagenesis site" description="No processing between p34 and p9." evidence="30">
    <original>Q</original>
    <variation>E</variation>
    <location>
        <position position="3379"/>
    </location>
</feature>
<feature type="mutagenesis site" description="No processing between p9 and p24." evidence="35">
    <original>Q</original>
    <variation>E</variation>
    <location>
        <position position="3462"/>
    </location>
</feature>
<feature type="mutagenesis site" description="No processing between p24 and p10." evidence="34 35">
    <original>Q</original>
    <variation>E</variation>
    <location>
        <position position="3672"/>
    </location>
</feature>
<feature type="mutagenesis site" description="No processing between p10 and p16." evidence="34 35">
    <original>Q</original>
    <variation>E</variation>
    <location>
        <position position="3783"/>
    </location>
</feature>
<feature type="mutagenesis site" description="No processing between p16 and p100." evidence="33">
    <original>Q</original>
    <variation>E</variation>
    <location>
        <position position="3928"/>
    </location>
</feature>
<feature type="mutagenesis site" description="No processing between p100 and p68." evidence="33 37">
    <original>Q</original>
    <variation>E</variation>
    <location>
        <position position="4868"/>
    </location>
</feature>
<feature type="mutagenesis site" description="No effect." evidence="33">
    <original>S</original>
    <variation>A</variation>
    <variation>G</variation>
    <location>
        <position position="4869"/>
    </location>
</feature>
<feature type="mutagenesis site" description="No processing between p68 and p58." evidence="37">
    <original>Q</original>
    <variation>M</variation>
    <location>
        <position position="5468"/>
    </location>
</feature>
<feature type="mutagenesis site" description="No processing between p58 and p39." evidence="37">
    <original>Q</original>
    <variation>E</variation>
    <location>
        <position position="5989"/>
    </location>
</feature>
<feature type="mutagenesis site" description="No processing between p39 and p35." evidence="37">
    <original>Q</original>
    <variation>E</variation>
    <location>
        <position position="6327"/>
    </location>
</feature>
<feature type="strand" evidence="40">
    <location>
        <begin position="1015"/>
        <end position="1021"/>
    </location>
</feature>
<feature type="helix" evidence="40">
    <location>
        <begin position="1023"/>
        <end position="1034"/>
    </location>
</feature>
<feature type="strand" evidence="40">
    <location>
        <begin position="1035"/>
        <end position="1042"/>
    </location>
</feature>
<feature type="helix" evidence="40">
    <location>
        <begin position="1052"/>
        <end position="1061"/>
    </location>
</feature>
<feature type="helix" evidence="40">
    <location>
        <begin position="1063"/>
        <end position="1076"/>
    </location>
</feature>
<feature type="strand" evidence="40">
    <location>
        <begin position="1080"/>
        <end position="1084"/>
    </location>
</feature>
<feature type="strand" evidence="40">
    <location>
        <begin position="1091"/>
        <end position="1097"/>
    </location>
</feature>
<feature type="helix" evidence="40">
    <location>
        <begin position="1107"/>
        <end position="1116"/>
    </location>
</feature>
<feature type="strand" evidence="40">
    <location>
        <begin position="1125"/>
        <end position="1129"/>
    </location>
</feature>
<feature type="strand" evidence="41">
    <location>
        <begin position="1133"/>
        <end position="1135"/>
    </location>
</feature>
<feature type="turn" evidence="41">
    <location>
        <begin position="1136"/>
        <end position="1139"/>
    </location>
</feature>
<feature type="helix" evidence="40">
    <location>
        <begin position="1140"/>
        <end position="1151"/>
    </location>
</feature>
<feature type="strand" evidence="40">
    <location>
        <begin position="1157"/>
        <end position="1163"/>
    </location>
</feature>
<feature type="helix" evidence="40">
    <location>
        <begin position="1165"/>
        <end position="1173"/>
    </location>
</feature>
<feature type="strand" evidence="42">
    <location>
        <begin position="1178"/>
        <end position="1188"/>
    </location>
</feature>
<feature type="strand" evidence="42">
    <location>
        <begin position="1190"/>
        <end position="1194"/>
    </location>
</feature>
<feature type="helix" evidence="42">
    <location>
        <begin position="1200"/>
        <end position="1203"/>
    </location>
</feature>
<feature type="strand" evidence="42">
    <location>
        <begin position="1209"/>
        <end position="1211"/>
    </location>
</feature>
<feature type="helix" evidence="42">
    <location>
        <begin position="1216"/>
        <end position="1218"/>
    </location>
</feature>
<feature type="strand" evidence="42">
    <location>
        <begin position="1224"/>
        <end position="1226"/>
    </location>
</feature>
<feature type="helix" evidence="43">
    <location>
        <begin position="1232"/>
        <end position="1235"/>
    </location>
</feature>
<feature type="turn" evidence="43">
    <location>
        <begin position="1236"/>
        <end position="1239"/>
    </location>
</feature>
<feature type="helix" evidence="43">
    <location>
        <begin position="1242"/>
        <end position="1251"/>
    </location>
</feature>
<feature type="strand" evidence="43">
    <location>
        <begin position="1258"/>
        <end position="1261"/>
    </location>
</feature>
<feature type="strand" evidence="43">
    <location>
        <begin position="1264"/>
        <end position="1267"/>
    </location>
</feature>
<feature type="turn" evidence="43">
    <location>
        <begin position="1271"/>
        <end position="1273"/>
    </location>
</feature>
<feature type="helix" evidence="43">
    <location>
        <begin position="1274"/>
        <end position="1285"/>
    </location>
</feature>
<feature type="helix" evidence="43">
    <location>
        <begin position="1294"/>
        <end position="1302"/>
    </location>
</feature>
<feature type="helix" evidence="43">
    <location>
        <begin position="1307"/>
        <end position="1316"/>
    </location>
</feature>
<feature type="helix" evidence="43">
    <location>
        <begin position="1327"/>
        <end position="1335"/>
    </location>
</feature>
<feature type="turn" evidence="43">
    <location>
        <begin position="1342"/>
        <end position="1344"/>
    </location>
</feature>
<feature type="strand" evidence="43">
    <location>
        <begin position="1346"/>
        <end position="1353"/>
    </location>
</feature>
<feature type="strand" evidence="43">
    <location>
        <begin position="1356"/>
        <end position="1363"/>
    </location>
</feature>
<feature type="helix" evidence="43">
    <location>
        <begin position="1364"/>
        <end position="1368"/>
    </location>
</feature>
<feature type="strand" evidence="43">
    <location>
        <begin position="1369"/>
        <end position="1376"/>
    </location>
</feature>
<feature type="helix" evidence="43">
    <location>
        <begin position="1377"/>
        <end position="1381"/>
    </location>
</feature>
<feature type="strand" evidence="43">
    <location>
        <begin position="1382"/>
        <end position="1386"/>
    </location>
</feature>
<feature type="turn" evidence="43">
    <location>
        <begin position="1388"/>
        <end position="1390"/>
    </location>
</feature>
<feature type="strand" evidence="43">
    <location>
        <begin position="1393"/>
        <end position="1413"/>
    </location>
</feature>
<feature type="strand" evidence="43">
    <location>
        <begin position="1415"/>
        <end position="1418"/>
    </location>
</feature>
<feature type="strand" evidence="43">
    <location>
        <begin position="1424"/>
        <end position="1431"/>
    </location>
</feature>
<feature type="strand" evidence="43">
    <location>
        <begin position="1435"/>
        <end position="1442"/>
    </location>
</feature>
<feature type="strand" evidence="43">
    <location>
        <begin position="1445"/>
        <end position="1447"/>
    </location>
</feature>
<feature type="strand" evidence="43">
    <location>
        <begin position="1458"/>
        <end position="1473"/>
    </location>
</feature>
<organismHost>
    <name type="scientific">Gallus gallus</name>
    <name type="common">Chicken</name>
    <dbReference type="NCBI Taxonomy" id="9031"/>
</organismHost>
<evidence type="ECO:0000250" key="1"/>
<evidence type="ECO:0000250" key="2">
    <source>
        <dbReference type="UniProtKB" id="P0C6X7"/>
    </source>
</evidence>
<evidence type="ECO:0000250" key="3">
    <source>
        <dbReference type="UniProtKB" id="P0C6Y3"/>
    </source>
</evidence>
<evidence type="ECO:0000250" key="4">
    <source>
        <dbReference type="UniProtKB" id="P0DTD1"/>
    </source>
</evidence>
<evidence type="ECO:0000255" key="5"/>
<evidence type="ECO:0000255" key="6">
    <source>
        <dbReference type="PROSITE-ProRule" id="PRU00214"/>
    </source>
</evidence>
<evidence type="ECO:0000255" key="7">
    <source>
        <dbReference type="PROSITE-ProRule" id="PRU00444"/>
    </source>
</evidence>
<evidence type="ECO:0000255" key="8">
    <source>
        <dbReference type="PROSITE-ProRule" id="PRU00490"/>
    </source>
</evidence>
<evidence type="ECO:0000255" key="9">
    <source>
        <dbReference type="PROSITE-ProRule" id="PRU00539"/>
    </source>
</evidence>
<evidence type="ECO:0000255" key="10">
    <source>
        <dbReference type="PROSITE-ProRule" id="PRU00772"/>
    </source>
</evidence>
<evidence type="ECO:0000255" key="11">
    <source>
        <dbReference type="PROSITE-ProRule" id="PRU00986"/>
    </source>
</evidence>
<evidence type="ECO:0000255" key="12">
    <source>
        <dbReference type="PROSITE-ProRule" id="PRU01291"/>
    </source>
</evidence>
<evidence type="ECO:0000255" key="13">
    <source>
        <dbReference type="PROSITE-ProRule" id="PRU01292"/>
    </source>
</evidence>
<evidence type="ECO:0000255" key="14">
    <source>
        <dbReference type="PROSITE-ProRule" id="PRU01293"/>
    </source>
</evidence>
<evidence type="ECO:0000255" key="15">
    <source>
        <dbReference type="PROSITE-ProRule" id="PRU01294"/>
    </source>
</evidence>
<evidence type="ECO:0000255" key="16">
    <source>
        <dbReference type="PROSITE-ProRule" id="PRU01295"/>
    </source>
</evidence>
<evidence type="ECO:0000255" key="17">
    <source>
        <dbReference type="PROSITE-ProRule" id="PRU01296"/>
    </source>
</evidence>
<evidence type="ECO:0000255" key="18">
    <source>
        <dbReference type="PROSITE-ProRule" id="PRU01297"/>
    </source>
</evidence>
<evidence type="ECO:0000255" key="19">
    <source>
        <dbReference type="PROSITE-ProRule" id="PRU01298"/>
    </source>
</evidence>
<evidence type="ECO:0000255" key="20">
    <source>
        <dbReference type="PROSITE-ProRule" id="PRU01299"/>
    </source>
</evidence>
<evidence type="ECO:0000255" key="21">
    <source>
        <dbReference type="PROSITE-ProRule" id="PRU01300"/>
    </source>
</evidence>
<evidence type="ECO:0000255" key="22">
    <source>
        <dbReference type="PROSITE-ProRule" id="PRU01303"/>
    </source>
</evidence>
<evidence type="ECO:0000255" key="23">
    <source>
        <dbReference type="PROSITE-ProRule" id="PRU01305"/>
    </source>
</evidence>
<evidence type="ECO:0000255" key="24">
    <source>
        <dbReference type="PROSITE-ProRule" id="PRU01306"/>
    </source>
</evidence>
<evidence type="ECO:0000255" key="25">
    <source>
        <dbReference type="PROSITE-ProRule" id="PRU01336"/>
    </source>
</evidence>
<evidence type="ECO:0000255" key="26">
    <source>
        <dbReference type="PROSITE-ProRule" id="PRU01337"/>
    </source>
</evidence>
<evidence type="ECO:0000255" key="27">
    <source>
        <dbReference type="PROSITE-ProRule" id="PRU01344"/>
    </source>
</evidence>
<evidence type="ECO:0000256" key="28">
    <source>
        <dbReference type="SAM" id="MobiDB-lite"/>
    </source>
</evidence>
<evidence type="ECO:0000269" key="29">
    <source>
    </source>
</evidence>
<evidence type="ECO:0000269" key="30">
    <source>
    </source>
</evidence>
<evidence type="ECO:0000269" key="31">
    <source>
    </source>
</evidence>
<evidence type="ECO:0000269" key="32">
    <source>
    </source>
</evidence>
<evidence type="ECO:0000269" key="33">
    <source>
    </source>
</evidence>
<evidence type="ECO:0000269" key="34">
    <source>
    </source>
</evidence>
<evidence type="ECO:0000269" key="35">
    <source>
    </source>
</evidence>
<evidence type="ECO:0000269" key="36">
    <source>
    </source>
</evidence>
<evidence type="ECO:0000269" key="37">
    <source>
    </source>
</evidence>
<evidence type="ECO:0000305" key="38"/>
<evidence type="ECO:0007744" key="39">
    <source>
        <dbReference type="PDB" id="4X2Z"/>
    </source>
</evidence>
<evidence type="ECO:0007829" key="40">
    <source>
        <dbReference type="PDB" id="3EJF"/>
    </source>
</evidence>
<evidence type="ECO:0007829" key="41">
    <source>
        <dbReference type="PDB" id="3EKE"/>
    </source>
</evidence>
<evidence type="ECO:0007829" key="42">
    <source>
        <dbReference type="PDB" id="4X2Z"/>
    </source>
</evidence>
<evidence type="ECO:0007829" key="43">
    <source>
        <dbReference type="PDB" id="5BZ0"/>
    </source>
</evidence>
<proteinExistence type="evidence at protein level"/>
<keyword id="KW-0002">3D-structure</keyword>
<keyword id="KW-1072">Activation of host autophagy by virus</keyword>
<keyword id="KW-0067">ATP-binding</keyword>
<keyword id="KW-1015">Disulfide bond</keyword>
<keyword id="KW-0255">Endonuclease</keyword>
<keyword id="KW-0269">Exonuclease</keyword>
<keyword id="KW-0347">Helicase</keyword>
<keyword id="KW-1035">Host cytoplasm</keyword>
<keyword id="KW-1038">Host endoplasmic reticulum</keyword>
<keyword id="KW-1043">Host membrane</keyword>
<keyword id="KW-0945">Host-virus interaction</keyword>
<keyword id="KW-0378">Hydrolase</keyword>
<keyword id="KW-0456">Lyase</keyword>
<keyword id="KW-0472">Membrane</keyword>
<keyword id="KW-0479">Metal-binding</keyword>
<keyword id="KW-0489">Methyltransferase</keyword>
<keyword id="KW-0540">Nuclease</keyword>
<keyword id="KW-0547">Nucleotide-binding</keyword>
<keyword id="KW-0548">Nucleotidyltransferase</keyword>
<keyword id="KW-0645">Protease</keyword>
<keyword id="KW-1185">Reference proteome</keyword>
<keyword id="KW-0677">Repeat</keyword>
<keyword id="KW-0688">Ribosomal frameshifting</keyword>
<keyword id="KW-0694">RNA-binding</keyword>
<keyword id="KW-0696">RNA-directed RNA polymerase</keyword>
<keyword id="KW-0788">Thiol protease</keyword>
<keyword id="KW-0808">Transferase</keyword>
<keyword id="KW-0812">Transmembrane</keyword>
<keyword id="KW-1133">Transmembrane helix</keyword>
<keyword id="KW-0693">Viral RNA replication</keyword>
<keyword id="KW-0862">Zinc</keyword>
<keyword id="KW-0863">Zinc-finger</keyword>
<organism>
    <name type="scientific">Avian infectious bronchitis virus (strain Beaudette)</name>
    <name type="common">IBV</name>
    <dbReference type="NCBI Taxonomy" id="11122"/>
    <lineage>
        <taxon>Viruses</taxon>
        <taxon>Riboviria</taxon>
        <taxon>Orthornavirae</taxon>
        <taxon>Pisuviricota</taxon>
        <taxon>Pisoniviricetes</taxon>
        <taxon>Nidovirales</taxon>
        <taxon>Cornidovirineae</taxon>
        <taxon>Coronaviridae</taxon>
        <taxon>Orthocoronavirinae</taxon>
        <taxon>Gammacoronavirus</taxon>
        <taxon>Igacovirus</taxon>
        <taxon>Avian coronavirus</taxon>
    </lineage>
</organism>
<accession>P0C6Y1</accession>
<accession>P26314</accession>
<accession>P27920</accession>
<accession>Q4ZJT1</accession>
<accession>Q4ZJT2</accession>
<gene>
    <name type="primary">rep</name>
    <name type="ORF">1a-1b</name>
</gene>
<reference key="1">
    <citation type="journal article" date="1987" name="J. Gen. Virol.">
        <title>Completion of the sequence of the genome of the coronavirus avian infectious bronchitis virus.</title>
        <authorList>
            <person name="Boursnell M.E.G."/>
            <person name="Brown T.D.K."/>
            <person name="Foulds I.J."/>
            <person name="Green P.F."/>
            <person name="Tomley F.M."/>
            <person name="Binns M.M."/>
        </authorList>
    </citation>
    <scope>NUCLEOTIDE SEQUENCE [GENOMIC RNA]</scope>
</reference>
<reference key="2">
    <citation type="journal article" date="2005" name="Biochem. Biophys. Res. Commun.">
        <title>Selection of and recombination between minor variants lead to the adaptation of an avian coronavirus to primate cells.</title>
        <authorList>
            <person name="Fang S.G."/>
            <person name="Shen S."/>
            <person name="Tay F.P."/>
            <person name="Liu D.X."/>
        </authorList>
    </citation>
    <scope>NUCLEOTIDE SEQUENCE [GENOMIC RNA]</scope>
    <source>
        <strain>Isolate Vero cell-adapted p65</strain>
    </source>
</reference>
<reference key="3">
    <citation type="journal article" date="1995" name="Virology">
        <title>Identification, expression, and processing of an 87-kDa polypeptide encoded by ORF 1a of the coronavirus infectious bronchitis virus.</title>
        <authorList>
            <person name="Liu D.X."/>
            <person name="Tibbles K.W."/>
            <person name="Cavanagh D."/>
            <person name="Brown T.D.K."/>
            <person name="Brierley I."/>
        </authorList>
    </citation>
    <scope>PROTEOLYTIC CLEAVAGE (ISOFORM REPLICASE POLYPROTEIN 1AB)</scope>
</reference>
<reference key="4">
    <citation type="journal article" date="1995" name="Virology">
        <title>Characterisation and mutational analysis of an ORF 1a-encoding proteinase domain responsible for proteolytic processing of the infectious bronchitis virus 1a/1b polyprotein.</title>
        <authorList>
            <person name="Liu D.X."/>
            <person name="Brown T.D.K."/>
        </authorList>
    </citation>
    <scope>CHARACTERIZATION (3C-LIKE PROTEINASE)</scope>
    <scope>MUTAGENESIS OF HIS-2820; GLU-2841; GLU-2843; CYS-2922; GLN-3928; GLN-4868 AND SER-4869</scope>
</reference>
<reference key="5">
    <citation type="journal article" date="1997" name="J. Virol.">
        <title>Proteolytic processing of the coronavirus infectious bronchitis virus 1a polyprotein: identification of a 10-kilodalton polypeptide and determination of its cleavage sites.</title>
        <authorList>
            <person name="Liu D.X."/>
            <person name="Xu H.Y."/>
            <person name="Brown T.D.K."/>
        </authorList>
    </citation>
    <scope>PROTEOLYTIC CLEAVAGE (ISOFORM REPLICASE POLYPROTEIN 1AB)</scope>
    <scope>MUTAGENESIS OF GLN-3672 AND GLN-3783</scope>
</reference>
<reference key="6">
    <citation type="journal article" date="1998" name="Virology">
        <title>Identification of a 24-kDa polypeptide processed from the coronavirus infectious bronchitis virus 1a polyprotein by the 3C-like proteinase and determination of its cleavage sites.</title>
        <authorList>
            <person name="Ng L.F.P."/>
            <person name="Liu D.X."/>
        </authorList>
    </citation>
    <scope>PROTEOLYTIC CLEAVAGE (ISOFORM REPLICASE POLYPROTEIN 1AB)</scope>
    <scope>MUTAGENESIS OF GLN-3462; GLN-3672 AND GLN-3783</scope>
</reference>
<reference key="7">
    <citation type="journal article" date="1998" name="Virology">
        <title>Characterization of the two overlapping papain-like proteinase domains encoded in gene 1 of the coronavirus infectious bronchitis virus and determination of the C-terminal cleavage site of an 87-kDa protein.</title>
        <authorList>
            <person name="Lim K.P."/>
            <person name="Liu D.X."/>
        </authorList>
    </citation>
    <scope>PROTEOLYTIC CLEAVAGE (ISOFORM REPLICASE POLYPROTEIN 1AB)</scope>
    <scope>CHARACTERIZATION (PAPAIN-LIKE PROTEINASE)</scope>
    <scope>MUTAGENESIS OF GLY-673; THR-676; CYS-1274 AND HIS-1437</scope>
</reference>
<reference key="8">
    <citation type="journal article" date="1998" name="Virology">
        <title>Proteolytic mapping of the coronavirus infectious bronchitis virus 1b polyprotein: evidence for the presence of four cleavage sites of the 3C-like proteinase and identification of two novel cleavage products.</title>
        <authorList>
            <person name="Liu D.X."/>
            <person name="Shen S."/>
            <person name="Xu H.Y."/>
            <person name="Wang S.F."/>
        </authorList>
    </citation>
    <scope>PROTEOLYTIC CLEAVAGE (ISOFORM REPLICASE POLYPROTEIN 1AB)</scope>
    <scope>MUTAGENESIS OF GLN-4868; GLN-5468; GLN-5989 AND GLN-6327</scope>
</reference>
<reference key="9">
    <citation type="journal article" date="2000" name="J. Virol.">
        <title>Identification of a novel cleavage activity of the first papain-like proteinase domain encoded by open reading frame 1a of the coronavirus avian infectious bronchitis virus and characterization of the cleavage products.</title>
        <authorList>
            <person name="Lim K.P."/>
            <person name="Ng L.F.P."/>
            <person name="Liu D.X."/>
        </authorList>
    </citation>
    <scope>PROTEOLYTIC CLEAVAGE (ISOFORM REPLICASE POLYPROTEIN 1AB)</scope>
    <scope>GLYCOSYLATION (NON-STRUCTURAL PROTEIN 4)</scope>
    <scope>MUTAGENESIS OF ALA-2264; GLY-2265 AND GLY-2266</scope>
</reference>
<reference key="10">
    <citation type="journal article" date="2000" name="Virology">
        <title>Further characterization of the coronavirus infectious bronchitis virus 3C-like proteinase and determination of a new cleavage site.</title>
        <authorList>
            <person name="Ng L.F.P."/>
            <person name="Liu D.X."/>
        </authorList>
    </citation>
    <scope>PROTEOLYTIC CLEAVAGE (ISOFORM REPLICASE POLYPROTEIN 1AB)</scope>
    <scope>MUTAGENESIS OF GLN-3086; GLN-3365 AND GLN-3379</scope>
</reference>
<reference key="11">
    <citation type="journal article" date="2001" name="Virology">
        <title>Further identification and characterization of novel intermediate and mature cleavage products released from the ORF 1b region of the avian coronavirus infectious bronchitis virus 1a/1b polyprotein.</title>
        <authorList>
            <person name="Xu H.Y."/>
            <person name="Lim K.P."/>
            <person name="Shen S."/>
            <person name="Liu D.X."/>
        </authorList>
    </citation>
    <scope>PROTEOLYTIC CLEAVAGE (REPLICASE POLYPROTEIN 1AB)</scope>
    <scope>SUBCELLULAR LOCATION</scope>
</reference>
<reference key="12">
    <citation type="journal article" date="2001" name="J. Virol.">
        <title>Induction of caspase-dependent apoptosis in cultured cells by the avian coronavirus infectious bronchitis virus.</title>
        <authorList>
            <person name="Liu C."/>
            <person name="Xu H.Y."/>
            <person name="Liu D.X."/>
        </authorList>
    </citation>
    <scope>APOPTOTIC FUNCTION (NON-STRUCTURAL PROTEIN 14)</scope>
</reference>
<reference key="13">
    <citation type="journal article" date="2002" name="J. Virol.">
        <title>Membrane association and dimerization of a cysteine-rich, 16-kilodalton polypeptide released from the C-terminal region of the coronavirus infectious bronchitis virus 1a polyprotein.</title>
        <authorList>
            <person name="Ng L.F.P."/>
            <person name="Liu D.X."/>
        </authorList>
    </citation>
    <scope>CHARACTERIZATION (NON-STRUCTURAL PROTEIN 10)</scope>
    <scope>MUTAGENESIS</scope>
</reference>
<reference key="14">
    <citation type="journal article" date="2010" name="J. Virol.">
        <title>The cellular RNA helicase DDX1 interacts with coronavirus nonstructural protein 14 and enhances viral replication.</title>
        <authorList>
            <person name="Xu L."/>
            <person name="Khadijah S."/>
            <person name="Fang S."/>
            <person name="Wang L."/>
            <person name="Tay F.P."/>
            <person name="Liu D.X."/>
        </authorList>
    </citation>
    <scope>INTERACTION WITH DDX1 (PROOFREADING EXORIBONUCLEASE)</scope>
</reference>
<reference evidence="39" key="15">
    <citation type="journal article" date="2015" name="J. Biol. Chem.">
        <title>Structural view and substrate specificity of papain-like protease from avian infectious bronchitis virus.</title>
        <authorList>
            <person name="Kong L."/>
            <person name="Shaw N."/>
            <person name="Yan L."/>
            <person name="Lou Z."/>
            <person name="Rao Z."/>
        </authorList>
    </citation>
    <scope>X-RAY CRYSTALLOGRAPHY (2.15 ANGSTROMS) OF 1174-1483 IN COMPLEX WITH ZINC</scope>
    <scope>FUNCTION (PAPAIN-LIKE PROTEASE)</scope>
    <scope>ACTIVE SITE (PAPAIN-LIKE PROTEASE)</scope>
</reference>
<dbReference type="EC" id="3.4.19.12" evidence="32"/>
<dbReference type="EC" id="3.4.22.-"/>
<dbReference type="EC" id="2.7.7.48"/>
<dbReference type="EC" id="2.7.7.50"/>
<dbReference type="EC" id="3.6.4.12" evidence="2"/>
<dbReference type="EC" id="3.6.4.13" evidence="2"/>
<dbReference type="EC" id="2.1.1.-"/>
<dbReference type="EC" id="3.1.13.-"/>
<dbReference type="EC" id="4.6.1.-" evidence="2"/>
<dbReference type="EC" id="2.1.1.57"/>
<dbReference type="EMBL" id="M94356">
    <property type="protein sequence ID" value="AAA46223.1"/>
    <property type="status" value="ALT_SEQ"/>
    <property type="molecule type" value="Genomic_RNA"/>
</dbReference>
<dbReference type="EMBL" id="M94356">
    <property type="protein sequence ID" value="AAA46224.1"/>
    <property type="status" value="ALT_SEQ"/>
    <property type="molecule type" value="Genomic_RNA"/>
</dbReference>
<dbReference type="EMBL" id="M95169">
    <property type="protein sequence ID" value="AAA70233.1"/>
    <property type="status" value="ALT_SEQ"/>
    <property type="molecule type" value="Genomic_RNA"/>
</dbReference>
<dbReference type="EMBL" id="M95169">
    <property type="protein sequence ID" value="AAA70234.1"/>
    <property type="status" value="ALT_SEQ"/>
    <property type="molecule type" value="Genomic_RNA"/>
</dbReference>
<dbReference type="EMBL" id="DQ001339">
    <property type="protein sequence ID" value="AAY24431.1"/>
    <property type="status" value="ALT_SEQ"/>
    <property type="molecule type" value="Genomic_RNA"/>
</dbReference>
<dbReference type="EMBL" id="DQ001339">
    <property type="protein sequence ID" value="AAY24432.1"/>
    <property type="status" value="ALT_SEQ"/>
    <property type="molecule type" value="Genomic_RNA"/>
</dbReference>
<dbReference type="PIR" id="A33094">
    <property type="entry name" value="VFIHB1"/>
</dbReference>
<dbReference type="PIR" id="B33094">
    <property type="entry name" value="VFIHB2"/>
</dbReference>
<dbReference type="PDB" id="3EJF">
    <property type="method" value="X-ray"/>
    <property type="resolution" value="1.60 A"/>
    <property type="chains" value="A=1005-1176"/>
</dbReference>
<dbReference type="PDB" id="3EKE">
    <property type="method" value="X-ray"/>
    <property type="resolution" value="2.10 A"/>
    <property type="chains" value="A=1005-1176"/>
</dbReference>
<dbReference type="PDB" id="4X2Z">
    <property type="method" value="X-ray"/>
    <property type="resolution" value="2.15 A"/>
    <property type="chains" value="A=1174-1483"/>
</dbReference>
<dbReference type="PDB" id="5BZ0">
    <property type="method" value="X-ray"/>
    <property type="resolution" value="2.10 A"/>
    <property type="chains" value="A=1174-1483"/>
</dbReference>
<dbReference type="PDBsum" id="3EJF"/>
<dbReference type="PDBsum" id="3EKE"/>
<dbReference type="PDBsum" id="4X2Z"/>
<dbReference type="PDBsum" id="5BZ0"/>
<dbReference type="SMR" id="P0C6Y1"/>
<dbReference type="IntAct" id="P0C6Y1">
    <property type="interactions" value="6"/>
</dbReference>
<dbReference type="MEROPS" id="C16.005"/>
<dbReference type="BRENDA" id="3.4.22.B14">
    <property type="organism ID" value="8728"/>
</dbReference>
<dbReference type="BRENDA" id="3.4.22.B50">
    <property type="organism ID" value="8728"/>
</dbReference>
<dbReference type="SABIO-RK" id="P0C6Y1"/>
<dbReference type="EvolutionaryTrace" id="P0C6Y1"/>
<dbReference type="Proteomes" id="UP000006717">
    <property type="component" value="Segment"/>
</dbReference>
<dbReference type="Proteomes" id="UP000180342">
    <property type="component" value="Genome"/>
</dbReference>
<dbReference type="GO" id="GO:0044167">
    <property type="term" value="C:host cell endoplasmic reticulum membrane"/>
    <property type="evidence" value="ECO:0007669"/>
    <property type="project" value="UniProtKB-SubCell"/>
</dbReference>
<dbReference type="GO" id="GO:0044172">
    <property type="term" value="C:host cell endoplasmic reticulum-Golgi intermediate compartment"/>
    <property type="evidence" value="ECO:0007669"/>
    <property type="project" value="UniProtKB-SubCell"/>
</dbReference>
<dbReference type="GO" id="GO:0044220">
    <property type="term" value="C:host cell perinuclear region of cytoplasm"/>
    <property type="evidence" value="ECO:0007669"/>
    <property type="project" value="UniProtKB-SubCell"/>
</dbReference>
<dbReference type="GO" id="GO:0016020">
    <property type="term" value="C:membrane"/>
    <property type="evidence" value="ECO:0007669"/>
    <property type="project" value="UniProtKB-KW"/>
</dbReference>
<dbReference type="GO" id="GO:0000175">
    <property type="term" value="F:3'-5'-RNA exonuclease activity"/>
    <property type="evidence" value="ECO:0007669"/>
    <property type="project" value="InterPro"/>
</dbReference>
<dbReference type="GO" id="GO:0043139">
    <property type="term" value="F:5'-3' DNA helicase activity"/>
    <property type="evidence" value="ECO:0007669"/>
    <property type="project" value="TreeGrafter"/>
</dbReference>
<dbReference type="GO" id="GO:0005524">
    <property type="term" value="F:ATP binding"/>
    <property type="evidence" value="ECO:0007669"/>
    <property type="project" value="UniProtKB-KW"/>
</dbReference>
<dbReference type="GO" id="GO:0016887">
    <property type="term" value="F:ATP hydrolysis activity"/>
    <property type="evidence" value="ECO:0007669"/>
    <property type="project" value="InterPro"/>
</dbReference>
<dbReference type="GO" id="GO:0004197">
    <property type="term" value="F:cysteine-type endopeptidase activity"/>
    <property type="evidence" value="ECO:0007669"/>
    <property type="project" value="InterPro"/>
</dbReference>
<dbReference type="GO" id="GO:0004519">
    <property type="term" value="F:endonuclease activity"/>
    <property type="evidence" value="ECO:0007669"/>
    <property type="project" value="UniProtKB-KW"/>
</dbReference>
<dbReference type="GO" id="GO:0016829">
    <property type="term" value="F:lyase activity"/>
    <property type="evidence" value="ECO:0007669"/>
    <property type="project" value="UniProtKB-KW"/>
</dbReference>
<dbReference type="GO" id="GO:0004483">
    <property type="term" value="F:mRNA (nucleoside-2'-O-)-methyltransferase activity"/>
    <property type="evidence" value="ECO:0007669"/>
    <property type="project" value="InterPro"/>
</dbReference>
<dbReference type="GO" id="GO:0004482">
    <property type="term" value="F:mRNA 5'-cap (guanine-N7-)-methyltransferase activity"/>
    <property type="evidence" value="ECO:0007669"/>
    <property type="project" value="InterPro"/>
</dbReference>
<dbReference type="GO" id="GO:0008242">
    <property type="term" value="F:omega peptidase activity"/>
    <property type="evidence" value="ECO:0007669"/>
    <property type="project" value="InterPro"/>
</dbReference>
<dbReference type="GO" id="GO:0003723">
    <property type="term" value="F:RNA binding"/>
    <property type="evidence" value="ECO:0007669"/>
    <property type="project" value="UniProtKB-KW"/>
</dbReference>
<dbReference type="GO" id="GO:0003724">
    <property type="term" value="F:RNA helicase activity"/>
    <property type="evidence" value="ECO:0007669"/>
    <property type="project" value="UniProtKB-EC"/>
</dbReference>
<dbReference type="GO" id="GO:0003968">
    <property type="term" value="F:RNA-directed RNA polymerase activity"/>
    <property type="evidence" value="ECO:0007669"/>
    <property type="project" value="UniProtKB-KW"/>
</dbReference>
<dbReference type="GO" id="GO:0008270">
    <property type="term" value="F:zinc ion binding"/>
    <property type="evidence" value="ECO:0007669"/>
    <property type="project" value="UniProtKB-KW"/>
</dbReference>
<dbReference type="GO" id="GO:0006351">
    <property type="term" value="P:DNA-templated transcription"/>
    <property type="evidence" value="ECO:0007669"/>
    <property type="project" value="InterPro"/>
</dbReference>
<dbReference type="GO" id="GO:0006508">
    <property type="term" value="P:proteolysis"/>
    <property type="evidence" value="ECO:0007669"/>
    <property type="project" value="UniProtKB-KW"/>
</dbReference>
<dbReference type="GO" id="GO:0010506">
    <property type="term" value="P:regulation of autophagy"/>
    <property type="evidence" value="ECO:0007669"/>
    <property type="project" value="InterPro"/>
</dbReference>
<dbReference type="GO" id="GO:0039520">
    <property type="term" value="P:symbiont-mediated activation of host autophagy"/>
    <property type="evidence" value="ECO:0007669"/>
    <property type="project" value="UniProtKB-KW"/>
</dbReference>
<dbReference type="GO" id="GO:0019082">
    <property type="term" value="P:viral protein processing"/>
    <property type="evidence" value="ECO:0007669"/>
    <property type="project" value="InterPro"/>
</dbReference>
<dbReference type="GO" id="GO:0039694">
    <property type="term" value="P:viral RNA genome replication"/>
    <property type="evidence" value="ECO:0007669"/>
    <property type="project" value="InterPro"/>
</dbReference>
<dbReference type="GO" id="GO:0075523">
    <property type="term" value="P:viral translational frameshifting"/>
    <property type="evidence" value="ECO:0007669"/>
    <property type="project" value="UniProtKB-KW"/>
</dbReference>
<dbReference type="CDD" id="cd21409">
    <property type="entry name" value="1B_cv_Nsp13-like"/>
    <property type="match status" value="1"/>
</dbReference>
<dbReference type="CDD" id="cd23529">
    <property type="entry name" value="capping_2-OMTase_gammaCoV_Nsp16"/>
    <property type="match status" value="1"/>
</dbReference>
<dbReference type="CDD" id="cd21512">
    <property type="entry name" value="cv_gamma-delta_Nsp2_IBV-like"/>
    <property type="match status" value="1"/>
</dbReference>
<dbReference type="CDD" id="cd21473">
    <property type="entry name" value="cv_Nsp4_TM"/>
    <property type="match status" value="1"/>
</dbReference>
<dbReference type="CDD" id="cd21559">
    <property type="entry name" value="gammaCoV-Nsp6"/>
    <property type="match status" value="1"/>
</dbReference>
<dbReference type="CDD" id="cd21902">
    <property type="entry name" value="gammaCoV_Nsp10"/>
    <property type="match status" value="1"/>
</dbReference>
<dbReference type="CDD" id="cd21720">
    <property type="entry name" value="gammaCoV_Nsp13-helicase"/>
    <property type="match status" value="1"/>
</dbReference>
<dbReference type="CDD" id="cd21658">
    <property type="entry name" value="gammaCoV_Nsp14"/>
    <property type="match status" value="1"/>
</dbReference>
<dbReference type="CDD" id="cd21667">
    <property type="entry name" value="gammaCoV_Nsp5_Mpro"/>
    <property type="match status" value="1"/>
</dbReference>
<dbReference type="CDD" id="cd21828">
    <property type="entry name" value="gammaCoV_Nsp7"/>
    <property type="match status" value="1"/>
</dbReference>
<dbReference type="CDD" id="cd21832">
    <property type="entry name" value="gammaCoV_Nsp8"/>
    <property type="match status" value="1"/>
</dbReference>
<dbReference type="CDD" id="cd21899">
    <property type="entry name" value="gammaCoV_Nsp9"/>
    <property type="match status" value="1"/>
</dbReference>
<dbReference type="CDD" id="cd21733">
    <property type="entry name" value="gammaCoV_PLPro"/>
    <property type="match status" value="1"/>
</dbReference>
<dbReference type="CDD" id="cd21587">
    <property type="entry name" value="gammaCoV_RdRp"/>
    <property type="match status" value="1"/>
</dbReference>
<dbReference type="CDD" id="cd21168">
    <property type="entry name" value="M_gcv_Nsp15-like"/>
    <property type="match status" value="1"/>
</dbReference>
<dbReference type="CDD" id="cd21557">
    <property type="entry name" value="Macro_X_Nsp3-like"/>
    <property type="match status" value="1"/>
</dbReference>
<dbReference type="CDD" id="cd21161">
    <property type="entry name" value="NendoU_cv_Nsp15-like"/>
    <property type="match status" value="1"/>
</dbReference>
<dbReference type="CDD" id="cd22650">
    <property type="entry name" value="NTD_gammaCoV_Nsp15-like"/>
    <property type="match status" value="1"/>
</dbReference>
<dbReference type="CDD" id="cd21689">
    <property type="entry name" value="stalk_CoV_Nsp13-like"/>
    <property type="match status" value="1"/>
</dbReference>
<dbReference type="CDD" id="cd21710">
    <property type="entry name" value="TM_Y_gammaCoV_Nsp3_C"/>
    <property type="match status" value="1"/>
</dbReference>
<dbReference type="CDD" id="cd21401">
    <property type="entry name" value="ZBD_cv_Nsp13-like"/>
    <property type="match status" value="1"/>
</dbReference>
<dbReference type="Gene3D" id="1.10.8.1190">
    <property type="match status" value="1"/>
</dbReference>
<dbReference type="Gene3D" id="2.60.120.1680">
    <property type="match status" value="1"/>
</dbReference>
<dbReference type="Gene3D" id="3.40.50.11580">
    <property type="match status" value="1"/>
</dbReference>
<dbReference type="Gene3D" id="6.10.250.2820">
    <property type="match status" value="1"/>
</dbReference>
<dbReference type="Gene3D" id="1.10.150.420">
    <property type="entry name" value="Coronavirus nonstructural protein 4 C-terminus"/>
    <property type="match status" value="1"/>
</dbReference>
<dbReference type="Gene3D" id="3.40.220.10">
    <property type="entry name" value="Leucine Aminopeptidase, subunit E, domain 1"/>
    <property type="match status" value="1"/>
</dbReference>
<dbReference type="Gene3D" id="1.10.1840.10">
    <property type="entry name" value="main proteinase (3clpro) structure, domain 3"/>
    <property type="match status" value="1"/>
</dbReference>
<dbReference type="Gene3D" id="3.30.160.820">
    <property type="entry name" value="Nsp15 N-terminal domain-like"/>
    <property type="match status" value="1"/>
</dbReference>
<dbReference type="Gene3D" id="1.10.8.370">
    <property type="entry name" value="nsp7 replicase"/>
    <property type="match status" value="1"/>
</dbReference>
<dbReference type="Gene3D" id="3.30.70.3540">
    <property type="entry name" value="Nsp8 replicase, head domain"/>
    <property type="match status" value="1"/>
</dbReference>
<dbReference type="Gene3D" id="3.40.50.300">
    <property type="entry name" value="P-loop containing nucleotide triphosphate hydrolases"/>
    <property type="match status" value="2"/>
</dbReference>
<dbReference type="Gene3D" id="2.40.10.250">
    <property type="entry name" value="Replicase NSP9"/>
    <property type="match status" value="1"/>
</dbReference>
<dbReference type="Gene3D" id="2.40.10.10">
    <property type="entry name" value="Trypsin-like serine proteases"/>
    <property type="match status" value="2"/>
</dbReference>
<dbReference type="Gene3D" id="3.40.50.150">
    <property type="entry name" value="Vaccinia Virus protein VP39"/>
    <property type="match status" value="1"/>
</dbReference>
<dbReference type="InterPro" id="IPR027351">
    <property type="entry name" value="(+)RNA_virus_helicase_core_dom"/>
</dbReference>
<dbReference type="InterPro" id="IPR003593">
    <property type="entry name" value="AAA+_ATPase"/>
</dbReference>
<dbReference type="InterPro" id="IPR046440">
    <property type="entry name" value="AV_NSP11N_COV_NSP15M"/>
</dbReference>
<dbReference type="InterPro" id="IPR050534">
    <property type="entry name" value="Coronavir_polyprotein_1ab"/>
</dbReference>
<dbReference type="InterPro" id="IPR043608">
    <property type="entry name" value="CoV_NSP15_M"/>
</dbReference>
<dbReference type="InterPro" id="IPR043606">
    <property type="entry name" value="CoV_NSP15_N"/>
</dbReference>
<dbReference type="InterPro" id="IPR049894">
    <property type="entry name" value="COV_NSP3_3ECTO"/>
</dbReference>
<dbReference type="InterPro" id="IPR043611">
    <property type="entry name" value="CoV_NSP3_C"/>
</dbReference>
<dbReference type="InterPro" id="IPR047566">
    <property type="entry name" value="CoV_NSP3_Y"/>
</dbReference>
<dbReference type="InterPro" id="IPR032505">
    <property type="entry name" value="CoV_NSP4_C"/>
</dbReference>
<dbReference type="InterPro" id="IPR043612">
    <property type="entry name" value="CoV_NSP4_N"/>
</dbReference>
<dbReference type="InterPro" id="IPR043502">
    <property type="entry name" value="DNA/RNA_pol_sf"/>
</dbReference>
<dbReference type="InterPro" id="IPR037227">
    <property type="entry name" value="EndoU-like"/>
</dbReference>
<dbReference type="InterPro" id="IPR002589">
    <property type="entry name" value="Macro_dom"/>
</dbReference>
<dbReference type="InterPro" id="IPR043472">
    <property type="entry name" value="Macro_dom-like"/>
</dbReference>
<dbReference type="InterPro" id="IPR044371">
    <property type="entry name" value="Macro_X_NSP3-like"/>
</dbReference>
<dbReference type="InterPro" id="IPR046435">
    <property type="entry name" value="N7_MTase_CoV"/>
</dbReference>
<dbReference type="InterPro" id="IPR043609">
    <property type="entry name" value="NendoU_nidovirus"/>
</dbReference>
<dbReference type="InterPro" id="IPR044863">
    <property type="entry name" value="NIRAN"/>
</dbReference>
<dbReference type="InterPro" id="IPR046438">
    <property type="entry name" value="NIV_2_O_MTASE"/>
</dbReference>
<dbReference type="InterPro" id="IPR046436">
    <property type="entry name" value="NIV_EXON"/>
</dbReference>
<dbReference type="InterPro" id="IPR036333">
    <property type="entry name" value="NSP10_sf_CoV"/>
</dbReference>
<dbReference type="InterPro" id="IPR047570">
    <property type="entry name" value="NSP12_IF_CoV"/>
</dbReference>
<dbReference type="InterPro" id="IPR044343">
    <property type="entry name" value="NSP13_1B_dom_CoV"/>
</dbReference>
<dbReference type="InterPro" id="IPR048673">
    <property type="entry name" value="NSP13_stalk_CoV"/>
</dbReference>
<dbReference type="InterPro" id="IPR048672">
    <property type="entry name" value="NSP13_ZBD_CoV"/>
</dbReference>
<dbReference type="InterPro" id="IPR027352">
    <property type="entry name" value="NSP13_ZBD_CoV-like"/>
</dbReference>
<dbReference type="InterPro" id="IPR009466">
    <property type="entry name" value="NSP14_CoV"/>
</dbReference>
<dbReference type="InterPro" id="IPR044316">
    <property type="entry name" value="NSP14_gammaCoV"/>
</dbReference>
<dbReference type="InterPro" id="IPR044328">
    <property type="entry name" value="NSP15_gammaCoV_N"/>
</dbReference>
<dbReference type="InterPro" id="IPR044325">
    <property type="entry name" value="NSP15_M_gammaCoV"/>
</dbReference>
<dbReference type="InterPro" id="IPR043174">
    <property type="entry name" value="NSP15_middle_sf"/>
</dbReference>
<dbReference type="InterPro" id="IPR042515">
    <property type="entry name" value="NSP15_N_CoV"/>
</dbReference>
<dbReference type="InterPro" id="IPR044401">
    <property type="entry name" value="NSP15_NendoU_CoV"/>
</dbReference>
<dbReference type="InterPro" id="IPR009461">
    <property type="entry name" value="NSP16_CoV-like"/>
</dbReference>
<dbReference type="InterPro" id="IPR040795">
    <property type="entry name" value="NSP2_gammaCoV"/>
</dbReference>
<dbReference type="InterPro" id="IPR044383">
    <property type="entry name" value="NSP2_IBV-like"/>
</dbReference>
<dbReference type="InterPro" id="IPR044357">
    <property type="entry name" value="NSP3_Ubl1_dom_CoV"/>
</dbReference>
<dbReference type="InterPro" id="IPR044353">
    <property type="entry name" value="Nsp3_Ubl2_dom_CoV"/>
</dbReference>
<dbReference type="InterPro" id="IPR038123">
    <property type="entry name" value="NSP4_C_sf_CoV"/>
</dbReference>
<dbReference type="InterPro" id="IPR044308">
    <property type="entry name" value="NSP5_Mpro_GammaCoV"/>
</dbReference>
<dbReference type="InterPro" id="IPR043610">
    <property type="entry name" value="NSP6_CoV"/>
</dbReference>
<dbReference type="InterPro" id="IPR044368">
    <property type="entry name" value="NSP6_gammaCoV"/>
</dbReference>
<dbReference type="InterPro" id="IPR014828">
    <property type="entry name" value="NSP7_CoV"/>
</dbReference>
<dbReference type="InterPro" id="IPR037204">
    <property type="entry name" value="NSP7_sf_CoV"/>
</dbReference>
<dbReference type="InterPro" id="IPR014829">
    <property type="entry name" value="NSP8_CoV"/>
</dbReference>
<dbReference type="InterPro" id="IPR037230">
    <property type="entry name" value="NSP8_sf_CoV"/>
</dbReference>
<dbReference type="InterPro" id="IPR014822">
    <property type="entry name" value="NSP9_CoV"/>
</dbReference>
<dbReference type="InterPro" id="IPR036499">
    <property type="entry name" value="NSP9_sf_CoV"/>
</dbReference>
<dbReference type="InterPro" id="IPR027417">
    <property type="entry name" value="P-loop_NTPase"/>
</dbReference>
<dbReference type="InterPro" id="IPR013016">
    <property type="entry name" value="Peptidase_C16_CoV"/>
</dbReference>
<dbReference type="InterPro" id="IPR008740">
    <property type="entry name" value="Peptidase_C30_CoV"/>
</dbReference>
<dbReference type="InterPro" id="IPR043477">
    <property type="entry name" value="Peptidase_C30_dom3_CoV"/>
</dbReference>
<dbReference type="InterPro" id="IPR009003">
    <property type="entry name" value="Peptidase_S1_PA"/>
</dbReference>
<dbReference type="InterPro" id="IPR043504">
    <property type="entry name" value="Peptidase_S1_PA_chymotrypsin"/>
</dbReference>
<dbReference type="InterPro" id="IPR043503">
    <property type="entry name" value="PLpro_palm_finger_dom_CoV"/>
</dbReference>
<dbReference type="InterPro" id="IPR043178">
    <property type="entry name" value="PLpro_thumb_sf_CoV"/>
</dbReference>
<dbReference type="InterPro" id="IPR046441">
    <property type="entry name" value="RdRp_CoV"/>
</dbReference>
<dbReference type="InterPro" id="IPR044358">
    <property type="entry name" value="RdRp_gammaCoV"/>
</dbReference>
<dbReference type="InterPro" id="IPR009469">
    <property type="entry name" value="RdRp_N_CoV"/>
</dbReference>
<dbReference type="InterPro" id="IPR001205">
    <property type="entry name" value="RNA-dir_pol_C"/>
</dbReference>
<dbReference type="InterPro" id="IPR007094">
    <property type="entry name" value="RNA-dir_pol_PSvirus"/>
</dbReference>
<dbReference type="InterPro" id="IPR018995">
    <property type="entry name" value="RNA_synth_NSP10_CoV"/>
</dbReference>
<dbReference type="InterPro" id="IPR029063">
    <property type="entry name" value="SAM-dependent_MTases_sf"/>
</dbReference>
<dbReference type="PANTHER" id="PTHR43788">
    <property type="entry name" value="DNA2/NAM7 HELICASE FAMILY MEMBER"/>
    <property type="match status" value="1"/>
</dbReference>
<dbReference type="PANTHER" id="PTHR43788:SF16">
    <property type="entry name" value="HELICASE WITH ZINC FINGER 2"/>
    <property type="match status" value="1"/>
</dbReference>
<dbReference type="Pfam" id="PF06471">
    <property type="entry name" value="CoV_ExoN"/>
    <property type="match status" value="1"/>
</dbReference>
<dbReference type="Pfam" id="PF06460">
    <property type="entry name" value="CoV_Methyltr_2"/>
    <property type="match status" value="1"/>
</dbReference>
<dbReference type="Pfam" id="PF09401">
    <property type="entry name" value="CoV_NSP10"/>
    <property type="match status" value="1"/>
</dbReference>
<dbReference type="Pfam" id="PF20631">
    <property type="entry name" value="CoV_NSP13_1B"/>
    <property type="match status" value="1"/>
</dbReference>
<dbReference type="Pfam" id="PF20633">
    <property type="entry name" value="CoV_NSP13_stalk"/>
    <property type="match status" value="1"/>
</dbReference>
<dbReference type="Pfam" id="PF20632">
    <property type="entry name" value="CoV_NSP13_ZBD"/>
    <property type="match status" value="1"/>
</dbReference>
<dbReference type="Pfam" id="PF19215">
    <property type="entry name" value="CoV_NSP15_C"/>
    <property type="match status" value="1"/>
</dbReference>
<dbReference type="Pfam" id="PF19216">
    <property type="entry name" value="CoV_NSP15_M"/>
    <property type="match status" value="1"/>
</dbReference>
<dbReference type="Pfam" id="PF19219">
    <property type="entry name" value="CoV_NSP15_N"/>
    <property type="match status" value="1"/>
</dbReference>
<dbReference type="Pfam" id="PF19218">
    <property type="entry name" value="CoV_NSP3_C"/>
    <property type="match status" value="1"/>
</dbReference>
<dbReference type="Pfam" id="PF16348">
    <property type="entry name" value="CoV_NSP4_C"/>
    <property type="match status" value="1"/>
</dbReference>
<dbReference type="Pfam" id="PF19217">
    <property type="entry name" value="CoV_NSP4_N"/>
    <property type="match status" value="1"/>
</dbReference>
<dbReference type="Pfam" id="PF19213">
    <property type="entry name" value="CoV_NSP6"/>
    <property type="match status" value="1"/>
</dbReference>
<dbReference type="Pfam" id="PF08716">
    <property type="entry name" value="CoV_NSP7"/>
    <property type="match status" value="1"/>
</dbReference>
<dbReference type="Pfam" id="PF08717">
    <property type="entry name" value="CoV_NSP8"/>
    <property type="match status" value="1"/>
</dbReference>
<dbReference type="Pfam" id="PF08710">
    <property type="entry name" value="CoV_NSP9"/>
    <property type="match status" value="1"/>
</dbReference>
<dbReference type="Pfam" id="PF08715">
    <property type="entry name" value="CoV_peptidase"/>
    <property type="match status" value="1"/>
</dbReference>
<dbReference type="Pfam" id="PF06478">
    <property type="entry name" value="CoV_RPol_N"/>
    <property type="match status" value="1"/>
</dbReference>
<dbReference type="Pfam" id="PF01661">
    <property type="entry name" value="Macro"/>
    <property type="match status" value="1"/>
</dbReference>
<dbReference type="Pfam" id="PF17896">
    <property type="entry name" value="NSP2_gammaCoV"/>
    <property type="match status" value="1"/>
</dbReference>
<dbReference type="Pfam" id="PF05409">
    <property type="entry name" value="Peptidase_C30"/>
    <property type="match status" value="1"/>
</dbReference>
<dbReference type="Pfam" id="PF00680">
    <property type="entry name" value="RdRP_1"/>
    <property type="match status" value="1"/>
</dbReference>
<dbReference type="Pfam" id="PF01443">
    <property type="entry name" value="Viral_helicase1"/>
    <property type="match status" value="1"/>
</dbReference>
<dbReference type="SMART" id="SM00506">
    <property type="entry name" value="A1pp"/>
    <property type="match status" value="1"/>
</dbReference>
<dbReference type="SMART" id="SM00382">
    <property type="entry name" value="AAA"/>
    <property type="match status" value="1"/>
</dbReference>
<dbReference type="SUPFAM" id="SSF144246">
    <property type="entry name" value="Coronavirus NSP10-like"/>
    <property type="match status" value="1"/>
</dbReference>
<dbReference type="SUPFAM" id="SSF140367">
    <property type="entry name" value="Coronavirus NSP7-like"/>
    <property type="match status" value="1"/>
</dbReference>
<dbReference type="SUPFAM" id="SSF143076">
    <property type="entry name" value="Coronavirus NSP8-like"/>
    <property type="match status" value="1"/>
</dbReference>
<dbReference type="SUPFAM" id="SSF56672">
    <property type="entry name" value="DNA/RNA polymerases"/>
    <property type="match status" value="1"/>
</dbReference>
<dbReference type="SUPFAM" id="SSF142877">
    <property type="entry name" value="EndoU-like"/>
    <property type="match status" value="1"/>
</dbReference>
<dbReference type="SUPFAM" id="SSF52949">
    <property type="entry name" value="Macro domain-like"/>
    <property type="match status" value="1"/>
</dbReference>
<dbReference type="SUPFAM" id="SSF52540">
    <property type="entry name" value="P-loop containing nucleoside triphosphate hydrolases"/>
    <property type="match status" value="1"/>
</dbReference>
<dbReference type="SUPFAM" id="SSF101816">
    <property type="entry name" value="Replicase NSP9"/>
    <property type="match status" value="1"/>
</dbReference>
<dbReference type="SUPFAM" id="SSF53335">
    <property type="entry name" value="S-adenosyl-L-methionine-dependent methyltransferases"/>
    <property type="match status" value="1"/>
</dbReference>
<dbReference type="SUPFAM" id="SSF50494">
    <property type="entry name" value="Trypsin-like serine proteases"/>
    <property type="match status" value="1"/>
</dbReference>
<dbReference type="PROSITE" id="PS51961">
    <property type="entry name" value="AV_NSP11N_COV_NSP15M"/>
    <property type="match status" value="1"/>
</dbReference>
<dbReference type="PROSITE" id="PS51993">
    <property type="entry name" value="COV_3ECTO"/>
    <property type="match status" value="1"/>
</dbReference>
<dbReference type="PROSITE" id="PS51952">
    <property type="entry name" value="COV_EXON_MTASE_COACT"/>
    <property type="match status" value="1"/>
</dbReference>
<dbReference type="PROSITE" id="PS51954">
    <property type="entry name" value="COV_N7_MTASE"/>
    <property type="match status" value="1"/>
</dbReference>
<dbReference type="PROSITE" id="PS52000">
    <property type="entry name" value="COV_NSP12_IF"/>
    <property type="match status" value="1"/>
</dbReference>
<dbReference type="PROSITE" id="PS51948">
    <property type="entry name" value="COV_NSP12_RDRP"/>
    <property type="match status" value="1"/>
</dbReference>
<dbReference type="PROSITE" id="PS51960">
    <property type="entry name" value="COV_NSP15_NTD"/>
    <property type="match status" value="1"/>
</dbReference>
<dbReference type="PROSITE" id="PS51992">
    <property type="entry name" value="COV_NSP3_Y"/>
    <property type="match status" value="1"/>
</dbReference>
<dbReference type="PROSITE" id="PS51943">
    <property type="entry name" value="COV_NSP3A_UBL"/>
    <property type="match status" value="1"/>
</dbReference>
<dbReference type="PROSITE" id="PS51944">
    <property type="entry name" value="COV_NSP3D_UBL"/>
    <property type="match status" value="1"/>
</dbReference>
<dbReference type="PROSITE" id="PS51946">
    <property type="entry name" value="COV_NSP4C"/>
    <property type="match status" value="1"/>
</dbReference>
<dbReference type="PROSITE" id="PS51949">
    <property type="entry name" value="COV_NSP7"/>
    <property type="match status" value="1"/>
</dbReference>
<dbReference type="PROSITE" id="PS51950">
    <property type="entry name" value="COV_NSP8"/>
    <property type="match status" value="1"/>
</dbReference>
<dbReference type="PROSITE" id="PS51951">
    <property type="entry name" value="COV_NSP9_SSRNA_BD"/>
    <property type="match status" value="1"/>
</dbReference>
<dbReference type="PROSITE" id="PS51653">
    <property type="entry name" value="CV_ZBD"/>
    <property type="match status" value="1"/>
</dbReference>
<dbReference type="PROSITE" id="PS51442">
    <property type="entry name" value="M_PRO"/>
    <property type="match status" value="1"/>
</dbReference>
<dbReference type="PROSITE" id="PS51154">
    <property type="entry name" value="MACRO"/>
    <property type="match status" value="1"/>
</dbReference>
<dbReference type="PROSITE" id="PS51958">
    <property type="entry name" value="NENDOU"/>
    <property type="match status" value="1"/>
</dbReference>
<dbReference type="PROSITE" id="PS51947">
    <property type="entry name" value="NIRAN"/>
    <property type="match status" value="1"/>
</dbReference>
<dbReference type="PROSITE" id="PS51955">
    <property type="entry name" value="NIV_2_O_MTASE"/>
    <property type="match status" value="1"/>
</dbReference>
<dbReference type="PROSITE" id="PS51953">
    <property type="entry name" value="NIV_EXON"/>
    <property type="match status" value="1"/>
</dbReference>
<dbReference type="PROSITE" id="PS51124">
    <property type="entry name" value="PEPTIDASE_C16"/>
    <property type="match status" value="1"/>
</dbReference>
<dbReference type="PROSITE" id="PS51657">
    <property type="entry name" value="PSRV_HELICASE"/>
    <property type="match status" value="1"/>
</dbReference>
<dbReference type="PROSITE" id="PS50507">
    <property type="entry name" value="RDRP_SSRNA_POS"/>
    <property type="match status" value="1"/>
</dbReference>
<name>R1AB_IBVB</name>
<comment type="function">
    <molecule>Isoform Replicase polyprotein 1ab</molecule>
    <text evidence="38">Multifunctional protein involved in the transcription and replication of viral RNAs. Contains the proteinases responsible for the cleavages of the polyprotein.</text>
</comment>
<comment type="function">
    <molecule>Non-structural protein 2</molecule>
    <text evidence="2">May play a role in the modulation of host cell survival signaling pathway by interacting with host PHB and PHB2 (By similarity). Indeed, these two proteins play a role in maintaining the functional integrity of the mitochondria and protecting cells from various stresses (By similarity).</text>
</comment>
<comment type="function">
    <molecule>Papain-like protease</molecule>
    <text evidence="2 32">Responsible for the cleavages located at the N-terminus of the replicase polyprotein (By similarity). In addition, PL-PRO possesses a deubiquitinating/deISGylating activity and processes both 'Lys-48'- and 'Lys-63'-linked polyubiquitin chains from cellular substrates (PubMed:25609249).</text>
</comment>
<comment type="function">
    <molecule>Non-structural protein 4</molecule>
    <text evidence="3">Plays a role in host membrane rearrangement that leads to creation of cytoplasmic double-membrane vesicles (DMV) necessary for viral replication (By similarity). Alone is able to induce paired membranes (By similarity). Coexpression of nsp3 and nsp4 does not result in the formation of DMVs (By similarity).</text>
</comment>
<comment type="function">
    <molecule>3C-like proteinase</molecule>
    <text evidence="10">Responsible for the majority of cleavages as it cleaves the C-terminus of replicase polyprotein at 11 sites. Recognizes substrates containing the core sequence [ILMVF]-Q-|-[SGACN]. Inhibited by the substrate-analog Cbz-Val-Asn-Ser-Thr-Leu-Gln-CMK.</text>
</comment>
<comment type="function">
    <molecule>Non-structural protein 7</molecule>
    <text evidence="2">Forms a hexadecamer with nsp8 (8 subunits of each) that may participate in viral replication by acting as a primase. Alternatively, may synthesize substantially longer products than oligonucleotide primers.</text>
</comment>
<comment type="function">
    <molecule>Non-structural protein 8</molecule>
    <text evidence="2">Forms a hexadecamer with nsp7 (8 subunits of each) that may participate in viral replication by acting as a primase. Alternatively, may synthesize substantially longer products than oligonucleotide primers.</text>
</comment>
<comment type="function">
    <molecule>Viral protein genome-linked nsp9</molecule>
    <text evidence="4">Forms a primer, NSP9-pU, which is utilized by the polymerase for the initiation of RNA chains. Interacts with ribosome signal recognition particle RNA (SRP). Together with NSP8, suppress protein integration into the cell membrane, thereby disrupting host immune defenses.</text>
</comment>
<comment type="function">
    <molecule>Non-structural protein 10</molecule>
    <text evidence="2">Plays a pivotal role in viral transcription by stimulating both nsp14 3'-5' exoribonuclease and nsp16 2'-O-methyltransferase activities (By similarity). Therefore plays an essential role in viral mRNAs cap methylation (By similarity).</text>
</comment>
<comment type="function">
    <molecule>RNA-directed RNA polymerase nsp12</molecule>
    <text evidence="4">RNA-directed RNA polymerase that catalyzes the transcription of viral genomic and subgenomic RNAs. Acts in complex with nsp7 and nsp8 to transcribe both the minus and positive strands of genomic RNA. The kinase-like NiRAN domain of NSP12 attaches one or more nucleotides to the amino terminus of NSP9, forming a covalent RNA-protein intermediate that serves as transcription/replication primer. Subgenomic RNAs (sgRNAs) are formed by discontinuous transcription: The polymerase has the ability to pause at transcription-regulating sequences (TRS) and jump to the leader TRS, resulting in a major deletion. This creates a series of subgenomic RNAs that are replicated, transcribed and translated. In addition, Nsp12 is a subunit of the viral RNA capping enzyme that catalyzes the RNA guanylyltransferase reaction for genomic and sub-genomic RNAs. Subsequently, the NiRAN domain transfers RNA to GDP, and forms the core cap structure GpppA-RNA.</text>
</comment>
<comment type="function">
    <molecule>Helicase</molecule>
    <text evidence="2">Multi-functional protein with a zinc-binding domain in N-terminus displaying RNA and DNA duplex-unwinding activities with 5' to 3' polarity. Activity of helicase is dependent on magnesium.</text>
</comment>
<comment type="function">
    <molecule>Proofreading exoribonuclease</molecule>
    <text evidence="2">Enzyme possessing two different activities: an exoribonuclease activity acting on both ssRNA and dsRNA in a 3' to 5' direction and a N7-guanine methyltransferase activity (By similarity). Acts as a proofreading exoribonuclease for RNA replication, thereby lowering The sensitivity of the virus to RNA mutagens (By similarity).</text>
</comment>
<comment type="function">
    <molecule>Uridylate-specific endoribonuclease</molecule>
    <text evidence="2">Plays a role in viral transcription/replication and prevents the simultaneous activation of host cell dsRNA sensors, such as MDA5/IFIH1, OAS, and PKR (By similarity). Acts by degrading the 5'-polyuridines generated during replication of the poly(A) region of viral genomic and subgenomic RNAs (By similarity). Catalyzes a two-step reaction in which a 2'3'-cyclic phosphate (2'3'-cP) is first generated by 2'-O transesterification, which is then hydrolyzed to a 3'-phosphate (3'-P) (By similarity). If not degraded, poly(U) RNA would hybridize with poly(A) RNA tails and activate host dsRNA sensors (By similarity).</text>
</comment>
<comment type="function">
    <molecule>2'-O-methyl transferase</molecule>
    <text evidence="2">Methyltransferase that mediates mRNA cap 2'-O-ribose methylation to the 5'-cap structure of viral mRNAs. N7-methyl guanosine cap is a prerequisite for binding of nsp16. Therefore plays an essential role in viral mRNAs cap methylation which is essential to evade immune system.</text>
</comment>
<comment type="catalytic activity">
    <molecule>Papain-like protease</molecule>
    <reaction evidence="32">
        <text>Thiol-dependent hydrolysis of ester, thioester, amide, peptide and isopeptide bonds formed by the C-terminal Gly of ubiquitin (a 76-residue protein attached to proteins as an intracellular targeting signal).</text>
        <dbReference type="EC" id="3.4.19.12"/>
    </reaction>
</comment>
<comment type="catalytic activity">
    <molecule>RNA-directed RNA polymerase nsp12</molecule>
    <reaction evidence="9">
        <text>RNA(n) + a ribonucleoside 5'-triphosphate = RNA(n+1) + diphosphate</text>
        <dbReference type="Rhea" id="RHEA:21248"/>
        <dbReference type="Rhea" id="RHEA-COMP:14527"/>
        <dbReference type="Rhea" id="RHEA-COMP:17342"/>
        <dbReference type="ChEBI" id="CHEBI:33019"/>
        <dbReference type="ChEBI" id="CHEBI:61557"/>
        <dbReference type="ChEBI" id="CHEBI:140395"/>
        <dbReference type="EC" id="2.7.7.48"/>
    </reaction>
</comment>
<comment type="catalytic activity">
    <molecule>Helicase</molecule>
    <reaction evidence="2">
        <text>ATP + H2O = ADP + phosphate + H(+)</text>
        <dbReference type="Rhea" id="RHEA:13065"/>
        <dbReference type="ChEBI" id="CHEBI:15377"/>
        <dbReference type="ChEBI" id="CHEBI:15378"/>
        <dbReference type="ChEBI" id="CHEBI:30616"/>
        <dbReference type="ChEBI" id="CHEBI:43474"/>
        <dbReference type="ChEBI" id="CHEBI:456216"/>
        <dbReference type="EC" id="3.6.4.12"/>
    </reaction>
</comment>
<comment type="catalytic activity">
    <molecule>Helicase</molecule>
    <reaction evidence="2">
        <text>ATP + H2O = ADP + phosphate + H(+)</text>
        <dbReference type="Rhea" id="RHEA:13065"/>
        <dbReference type="ChEBI" id="CHEBI:15377"/>
        <dbReference type="ChEBI" id="CHEBI:15378"/>
        <dbReference type="ChEBI" id="CHEBI:30616"/>
        <dbReference type="ChEBI" id="CHEBI:43474"/>
        <dbReference type="ChEBI" id="CHEBI:456216"/>
        <dbReference type="EC" id="3.6.4.13"/>
    </reaction>
</comment>
<comment type="catalytic activity">
    <molecule>Uridylate-specific endoribonuclease</molecule>
    <reaction evidence="2">
        <text>uridylyl-uridylyl-ribonucleotide-RNA = a 3'-end uridylyl-2',3'-cyclophospho-uridine-RNA + a 5'-end dephospho-ribonucleoside-RNA</text>
        <dbReference type="Rhea" id="RHEA:67732"/>
        <dbReference type="Rhea" id="RHEA-COMP:13936"/>
        <dbReference type="Rhea" id="RHEA-COMP:17334"/>
        <dbReference type="Rhea" id="RHEA-COMP:17335"/>
        <dbReference type="ChEBI" id="CHEBI:138284"/>
        <dbReference type="ChEBI" id="CHEBI:173079"/>
        <dbReference type="ChEBI" id="CHEBI:173080"/>
    </reaction>
</comment>
<comment type="catalytic activity">
    <molecule>RNA-directed RNA polymerase nsp12</molecule>
    <reaction evidence="4">
        <text>a 5'-end diphospho-ribonucleoside in mRNA + GTP + H(+) = a 5'-end (5'-triphosphoguanosine)-ribonucleoside in mRNA + diphosphate</text>
        <dbReference type="Rhea" id="RHEA:67012"/>
        <dbReference type="Rhea" id="RHEA-COMP:17165"/>
        <dbReference type="Rhea" id="RHEA-COMP:17166"/>
        <dbReference type="ChEBI" id="CHEBI:15378"/>
        <dbReference type="ChEBI" id="CHEBI:33019"/>
        <dbReference type="ChEBI" id="CHEBI:37565"/>
        <dbReference type="ChEBI" id="CHEBI:167616"/>
        <dbReference type="ChEBI" id="CHEBI:167617"/>
        <dbReference type="EC" id="2.7.7.50"/>
    </reaction>
    <physiologicalReaction direction="left-to-right" evidence="4">
        <dbReference type="Rhea" id="RHEA:67013"/>
    </physiologicalReaction>
</comment>
<comment type="catalytic activity">
    <molecule>2'-O-methyl transferase</molecule>
    <reaction evidence="2">
        <text>a 5'-end (N(7)-methyl 5'-triphosphoguanosine)-ribonucleoside in mRNA + S-adenosyl-L-methionine = a 5'-end (N(7)-methyl 5'-triphosphoguanosine)-(2'-O-methyl-ribonucleoside) in mRNA + S-adenosyl-L-homocysteine + H(+)</text>
        <dbReference type="Rhea" id="RHEA:67020"/>
        <dbReference type="Rhea" id="RHEA-COMP:17167"/>
        <dbReference type="Rhea" id="RHEA-COMP:17168"/>
        <dbReference type="ChEBI" id="CHEBI:15378"/>
        <dbReference type="ChEBI" id="CHEBI:57856"/>
        <dbReference type="ChEBI" id="CHEBI:59789"/>
        <dbReference type="ChEBI" id="CHEBI:156461"/>
        <dbReference type="ChEBI" id="CHEBI:167609"/>
        <dbReference type="EC" id="2.1.1.57"/>
    </reaction>
</comment>
<comment type="cofactor">
    <molecule>Uridylate-specific endoribonuclease</molecule>
    <cofactor evidence="2">
        <name>Mn(2+)</name>
        <dbReference type="ChEBI" id="CHEBI:29035"/>
    </cofactor>
    <text evidence="2">Likely affects Nsp15 binding to RNA.</text>
</comment>
<comment type="cofactor">
    <molecule>Papain-like protease</molecule>
    <cofactor evidence="2">
        <name>Zn(2+)</name>
        <dbReference type="ChEBI" id="CHEBI:29105"/>
    </cofactor>
</comment>
<comment type="subunit">
    <molecule>Non-structural protein 2</molecule>
    <text evidence="2">Interacts with host PHB and PHB2.</text>
</comment>
<comment type="subunit">
    <molecule>Non-structural protein 4</molecule>
    <text evidence="2">Interacts with papain-like protease and non-structural protein 6.</text>
</comment>
<comment type="subunit">
    <molecule>3C-like proteinase</molecule>
    <text evidence="2">Monomer. Homodimer. Only the homodimer shows catalytic activity.</text>
</comment>
<comment type="subunit">
    <molecule>Non-structural protein 7</molecule>
    <text evidence="2">Eight copies of nsp7 and eight copies of nsp8 assemble to form a heterohexadecamer dsRNA-encircling ring structure.</text>
</comment>
<comment type="subunit">
    <molecule>Non-structural protein 8</molecule>
    <text evidence="2">Eight copies of nsp7 and eight copies of nsp8 assemble to form a heterohexadecamer dsRNA-encircling ring structure (By similarity). Interacts with ORF6 protein (By similarity).</text>
</comment>
<comment type="subunit">
    <molecule>Viral protein genome-linked nsp9</molecule>
    <text evidence="3">Homodimer.</text>
</comment>
<comment type="subunit">
    <molecule>Non-structural protein 10</molecule>
    <text evidence="2">Homododecamer (By similarity). Interacts with proofreading exoribonuclease nsp14 and 2'-O-methyltransferase nsp16; these interactions enhance nsp14 and nsp16 enzymatic activities (By similarity).</text>
</comment>
<comment type="subunit">
    <molecule>Proofreading exoribonuclease</molecule>
    <text evidence="2 31">Interacts with host DDX1 (via C-terminus) (PubMed:20573827). Interacts with non-structural protein 10 (By similarity).</text>
</comment>
<comment type="subunit">
    <molecule>Uridylate-specific endoribonuclease</molecule>
    <text evidence="2">Homohexamer.</text>
</comment>
<comment type="subunit">
    <molecule>2'-O-methyl transferase</molecule>
    <text evidence="2">Interacts with non-structural protein 10.</text>
</comment>
<comment type="interaction">
    <interactant intactId="EBI-25826989">
        <id>PRO_0000037415</id>
    </interactant>
    <interactant intactId="EBI-358474">
        <id>Q92499</id>
        <label>DDX1</label>
    </interactant>
    <organismsDiffer>true</organismsDiffer>
    <experiments>5</experiments>
</comment>
<comment type="subcellular location">
    <molecule>Papain-like protease</molecule>
    <subcellularLocation>
        <location evidence="3">Host endoplasmic reticulum membrane</location>
        <topology evidence="38">Multi-pass membrane protein</topology>
    </subcellularLocation>
    <subcellularLocation>
        <location evidence="2">Host cytoplasm</location>
    </subcellularLocation>
    <text evidence="3">Gammacoronaviruses induce membrane zippering to form zippered endoplasmic reticulum (zER).</text>
</comment>
<comment type="subcellular location">
    <molecule>Non-structural protein 4</molecule>
    <subcellularLocation>
        <location evidence="3">Host endoplasmic reticulum membrane</location>
        <topology evidence="38">Multi-pass membrane protein</topology>
    </subcellularLocation>
    <subcellularLocation>
        <location evidence="2">Host cytoplasm</location>
    </subcellularLocation>
    <text evidence="3">Gammacoronaviruses induce membrane zippering to form zippered endoplasmic reticulum (zER).</text>
</comment>
<comment type="subcellular location">
    <molecule>Non-structural protein 6</molecule>
    <subcellularLocation>
        <location evidence="3">Host endoplasmic reticulum membrane</location>
        <topology evidence="38">Multi-pass membrane protein</topology>
    </subcellularLocation>
    <text evidence="3">Gammacoronaviruses induce membrane zippering to form zippered endoplasmic reticulum (zER).</text>
</comment>
<comment type="subcellular location">
    <molecule>Non-structural protein 7</molecule>
    <subcellularLocation>
        <location evidence="1">Host cytoplasm</location>
        <location evidence="1">Host perinuclear region</location>
    </subcellularLocation>
    <subcellularLocation>
        <location evidence="4">Host cytoplasm</location>
    </subcellularLocation>
    <subcellularLocation>
        <location evidence="4">Host endoplasmic reticulum</location>
    </subcellularLocation>
    <text>nsp7, nsp8, nsp9 and nsp10 are localized in cytoplasmic foci, largely perinuclear. Late in infection, they merge into confluent complexes.</text>
</comment>
<comment type="subcellular location">
    <molecule>Non-structural protein 8</molecule>
    <subcellularLocation>
        <location evidence="2">Host cytoplasm</location>
        <location evidence="2">Host perinuclear region</location>
    </subcellularLocation>
    <subcellularLocation>
        <location evidence="4">Host cytoplasm</location>
    </subcellularLocation>
    <subcellularLocation>
        <location evidence="4">Host endoplasmic reticulum</location>
    </subcellularLocation>
    <text>nsp7, nsp8, nsp9 and nsp10 are localized in cytoplasmic foci, largely perinuclear. Late in infection, they merge into confluent complexes.</text>
</comment>
<comment type="subcellular location">
    <molecule>Viral protein genome-linked nsp9</molecule>
    <subcellularLocation>
        <location evidence="1">Host cytoplasm</location>
        <location evidence="1">Host perinuclear region</location>
    </subcellularLocation>
    <subcellularLocation>
        <location evidence="4">Host cytoplasm</location>
    </subcellularLocation>
    <subcellularLocation>
        <location evidence="4">Host endoplasmic reticulum</location>
    </subcellularLocation>
    <text>nsp7, nsp8, nsp9 and nsp10 are localized in cytoplasmic foci, largely perinuclear. Late in infection, they merge into confluent complexes.</text>
</comment>
<comment type="subcellular location">
    <molecule>Non-structural protein 10</molecule>
    <subcellularLocation>
        <location evidence="1">Host cytoplasm</location>
        <location evidence="1">Host perinuclear region</location>
    </subcellularLocation>
    <subcellularLocation>
        <location evidence="4">Host cytoplasm</location>
    </subcellularLocation>
    <subcellularLocation>
        <location evidence="4">Host endoplasmic reticulum</location>
    </subcellularLocation>
    <text>nsp7, nsp8, nsp9 and nsp10 are localized in cytoplasmic foci, largely perinuclear. Late in infection, they merge into confluent complexes.</text>
</comment>
<comment type="subcellular location">
    <molecule>Helicase</molecule>
    <subcellularLocation>
        <location evidence="38">Host endoplasmic reticulum-Golgi intermediate compartment</location>
    </subcellularLocation>
    <text>The helicase interacts with the N protein in membranous complexes and colocalizes with sites of synthesis of new viral RNA.</text>
</comment>
<comment type="subcellular location">
    <molecule>Proofreading exoribonuclease</molecule>
    <subcellularLocation>
        <location evidence="4">Host cytoplasm</location>
    </subcellularLocation>
    <subcellularLocation>
        <location evidence="4">Host endoplasmic reticulum</location>
    </subcellularLocation>
</comment>
<comment type="subcellular location">
    <molecule>Uridylate-specific endoribonuclease</molecule>
    <subcellularLocation>
        <location evidence="4">Host cytoplasm</location>
    </subcellularLocation>
    <subcellularLocation>
        <location evidence="4">Host endoplasmic reticulum</location>
    </subcellularLocation>
</comment>
<comment type="alternative products">
    <event type="ribosomal frameshifting"/>
    <isoform>
        <id>P0C6Y1-1</id>
        <name>Replicase polyprotein 1ab</name>
        <name>pp1ab</name>
        <sequence type="displayed"/>
    </isoform>
    <isoform>
        <id>P0C6V3-1</id>
        <name>Replicase polyprotein 1a</name>
        <name>pp1a</name>
        <name>ORF1a polyprotein</name>
        <sequence type="external"/>
    </isoform>
    <text evidence="38">Isoform Replicase polyprotein 1ab is produced by -1 ribosomal frameshifting at the 1a-1b genes boundary. Isoform Replicase polyprotein 1a is produced by conventional translation.</text>
</comment>
<comment type="domain">
    <molecule>Papain-like protease</molecule>
    <text evidence="2">The hydrophobic region HD1 probably mediates the membrane association of the replication complex.</text>
</comment>
<comment type="domain">
    <molecule>Non-structural protein 4</molecule>
    <text evidence="2">The hydrophobic region HD2 probably mediates the membrane association of the replication complex.</text>
</comment>
<comment type="domain">
    <molecule>Non-structural protein 6</molecule>
    <text evidence="2">The hydrophobic region HD3 probably mediates the membrane association of the replication complex.</text>
</comment>
<comment type="PTM">
    <molecule>Isoform Replicase polyprotein 1ab</molecule>
    <text evidence="2">Specific enzymatic cleavages in vivo by its own proteases yield mature proteins (By similarity). 3C-like proteinase nsp5 liberates nsps 6-16 from the polyprotein (By similarity). Papain-like and 3C-like proteinases are autocatalytically processed.</text>
</comment>
<comment type="PTM">
    <molecule>Non-structural protein 4</molecule>
    <text evidence="29">N-glycosylated.</text>
</comment>
<comment type="similarity">
    <text evidence="38">Belongs to the coronaviruses polyprotein 1ab family.</text>
</comment>
<comment type="sequence caution" evidence="38">
    <conflict type="erroneous gene model prediction">
        <sequence resource="EMBL-CDS" id="AAA46223"/>
    </conflict>
</comment>
<comment type="sequence caution" evidence="38">
    <conflict type="erroneous gene model prediction">
        <sequence resource="EMBL-CDS" id="AAA46224"/>
    </conflict>
</comment>
<comment type="sequence caution" evidence="38">
    <conflict type="erroneous gene model prediction">
        <sequence resource="EMBL-CDS" id="AAA70233"/>
    </conflict>
</comment>
<comment type="sequence caution" evidence="38">
    <conflict type="erroneous gene model prediction">
        <sequence resource="EMBL-CDS" id="AAA70234"/>
    </conflict>
</comment>
<comment type="sequence caution" evidence="38">
    <conflict type="erroneous gene model prediction">
        <sequence resource="EMBL-CDS" id="AAY24431"/>
    </conflict>
</comment>
<comment type="sequence caution" evidence="38">
    <conflict type="erroneous gene model prediction">
        <sequence resource="EMBL-CDS" id="AAY24432"/>
    </conflict>
</comment>
<sequence length="6629" mass="744540">MASSLKQGVSPKPRDVILVSKDIPEQLCDALFFYTSHNPKDYADAFAVRQKFDRSLQTGKQFKFETVCGLFLLKGVDKITPGVPAKVLKATSKLADLEDIFGVSPLARKYRELLKTACQWSLTVEALDVRAQTLDEIFDPTEILWLQVAAKIHVSSMAMRRLVGEVTAKVMDALGSNLSALFQIVKQQIARIFQKALAIFENVNELPQRIAALKMAFAKCARSITVVVVERTLVVKEFAGTCLASINGAVAKFFEELPNGFMGSKIFTTLAFFKEAAVRVVENIPNAPRGTKGFEVVGNAKGTQVVVRGMRNDLTLLDQKADIPVEPEGWSAILDGHLCYVFRSGDRFYAAPLSGNFALSDVHCCERVVCLSDGVTPEINDGLILAAIYSSFSVSELVTALKKGEPFKFLGHKFVYAKDAAVSFTLAKAATIADVLRLFQSARVIAEDVWSSFTEKSFEFWKLAYGKVRNLEEFVKTYVCKAQMSIVILAAVLGEDIWHLVSQVIYKLGVLFTKVVDFCDKHWKGFCVQLKRAKLIVTETFCVLKGVAQHCFQLLLDAIHSLYKSFKKCALGRIHGDLLFWKGGVHKIVQDGDEIWFDAIDSVDVEDLGVVQEKSIDFEVCDDVTLPENQPGHMVQIEDDGKNYMFFRFKKDENIYYTPMSQLGAINVVCKAGGKTVTFGETTVQEIPPPDVVPIKVSIECCGEPWNTIFKKAYKEPIEVDTDLTVEQLLSVIYEKMCDDLKLFPEAPEPPPFENVALVDKNGKDLDCIKSCHLIYRDYESDDDIEEEDAEECDTDSGEAEECDTNSECEEEDEDTKVLALIQDPASIKYPLPLDEDYSVYNGCIVHKDALDVVNLPSGEETFVVNNCFEGAVKPLPQKVVDVLGDWGEAVDAQEQLCQQEPLQHTFEEPVENSTGSSKTMTEQVVVEDQELPVVEQDQDVVVYTPTDLEVAKETAEEVDEFILIFAVPKEEVVSQKDGAQIKQEPIQVVKPQREKKAKKFKVKPATCEKPKFLEYKTCVGDLTVVIAKALDEFKEFCIVNAANEHMTHGSGVAKAIADFCGLDFVEYCEDYVKKHGPQQRLVTPSFVKGIQCVNNVVGPRHGDNNLHEKLVAAYKNVLVDGVVNYVVPVLSLGIFGVDFKMSIDAMREAFEGCTIRVLLFSLSQEHIDYFDVTCKQKTIYLTEDGVKYRSIVLKPGDSLGQFGQVYAKNKIVFTADDVEDKEILYVPTTDKSILEYYGLDAQKYVIYLQTLAQKWNVQYRDNFLILEWRDGNCWISSAIVLLQAAKIRFKGFLTEAWAKLLGGDPTDFVAWCYASCTAKVGDFSDANWLLANLAEHFDADYTNAFLKKRVSCNCGIKSYELRGLEACIQPVRATNLLHFKTQYSNCPTCGANNTDEVIEASLPYLLLFATDGPATVDCDEDAVGTVVFVGSTNSGHCYTQAAGQAFDNLAKDRKFGKKSPYITAMYTRFAFKNETSLPVAKQSKGKSKSVKEDVSNLATSSKASFDNLTDFEQWYDSNIYESLKVQESPDNFDKYVSFTTKEDSKLPLTLKVRGIKSVVDFRSKDGFIYKLTPDTDENSKAPVYYPVLDAISLKAIWVEGNANFVVGHPNYYSKSLHIPTFWENAENFVKMGDKIGGVTMGLWRAEHLNKPNLERIFNIAKKAIVGSSVVTTQCGKLIGKAATFIADKVGGGVVRNITDSIKGLCGITRGHFERKMSPQFLKTLMFFLFYFLKASVKSVVASYKTVLCKVVLATLLIVWFVYTSNPVMFTGIRVLDFLFEGSLCGPYKDYGKDSFDVLRYCADDFICRVCLHDKDSLHLYKHAYSVEQVYKDAASGFIFNWNWLYLVFLILFVKPVAGFVIICYCVKYLVLNSTVLQTGVCFLDWFVQTVFSHFNFMGAGFYFWLFYKIYIQVHHILYCKDVTCEVCKRVARSNRQEVSVVVGGRKQIVHVYTNSGYNFCKRHNWYCRNCDDYGHQNTFMSPEVAGELSEKLKRHVKPTAYAYHVVDEACLVDDFVNLKYKAATPGKDSASSAVKCFSVTDFLKKAVFLKEALKCEQISNDGFIVCNTQSAHALEEAKNAAIYYAQYLCKPILILDQALYEQLVVEPVSKSVIDKVCSILSSIISVDTAALNYKAGTLRDALLSITKDEEAVDMAIFCHNHDVDYTGDGFTNVIPSYGIDTGKLTPRDRGFLINADASIANLRVKNAPPVVWKFSELIKLSDSCLKYLISATVKSGVRFFITKSGAKQVIACHTQKLLVEKKAGGIVSGTFKCFKSYFKWLLIFYILFTACCSGYYYMEVSKSFVHPMYDVNSTLHVEGFKVIDKGVLREIVPEDTCFSNKFVNFDAFWGRPYDNSRNCPIVTAVIDGDGTVATGVPGFVSWVMDGVMFIHMTQTERKPWYIPTWFNREIVGYTQDSIITEGSFYTSIALFSARCLYLTASNTPQLYCFNGDNDAPGALPFGSIIPHRVYFQPNGVRLIVPQQILHTPYVVKFVSDSYCRGSVCEYTRPGYCVSLNPQWVLFNDEYTSKPGVFCGSTVRELMFSMVSTFFTGVNPNIYMQLATMFLILVVVVLIFAMVIKFQGVFKAYATTVFITMLVWVINAFILCVHSYNSVLAVILLVLYCYASLVTSRNTVIIMHCWLVFTFGLIVPTWLACCYLGFIIYMYTPLFLWCYGTTKNTRKLYDGNEFVGNYDLAAKSTFVIRGSEFVKLTNEIGDKFEAYLSAYARLKYYSGTGSEQDYLQACRAWLAYALDQYRNSGVEIVYTPPRYSIGVSRLQSGFKKLVSPSSAVEKCIVSVSYRGNNLNGLWLGDTIYCPRHVLGKFSGDQWNDVLNLANNHEFEVTTQHGVTLNVVSRRLKGAVLILQTAVANAETPKYKFIKANCGDSFTIACAYGGTVVGLYPVTMRSNGTIRASFLAGACGSVGFNIEKGVVNFFYMHHLELPNALHTGTDLMGEFYGGYVDEEVAQRVPPDNLVTNNIVAWLYAAIISVKESSFSLPKWLESTTVSVDDYNKWAGDNGFTPFSTSTAITKLSAITGVDVCKLLRTIMVKNSQWGGDPILGQYNFEDELTPESVFNQIGGVRLQSSFVRKATSWFWSRCVLACFLFVLCAIVLFTAVPLKFYVYAAVILLMAVLFISFTVKHVMAYMDTFLLPTLITVIIGVCAEVPFIYNTLISQVVIFLSQWYDPVVFDTMVPWMFLPLVLYTAFKCVQGCYMNSFNTSLLMLYQFVKLGFVIYTSSNTLTAYTEGNWELFFELVHTTVLANVSSNSLIGLFVFKCAKWMLYYCNATYLNNYVLMAVMVNCIGWLCTCYFGLYWWVNKVFGLTLGKYNFKVSVDQYRYMCLHKINPPKTVWEVFSTNILIQGIGGDRVLPIATVQAKLSDVKCTTVVLMQLLTKLNVEANSKMHVYLVELHNKILASDDVGECMDNLLGMLITLFCIDSTIDLSEYCDDILKRSTVLQSVTQEFSHIPSYAEYERAKNLYEKVLVDSKNGGVTQQELAAYRKAANIAKSVFDRDLAVQKKLDSMAERAMTTMYKEARVTDRRAKLVSSLHALLFSMLKKIDSEKLNVLFDQASSGVVPLATVPIVCSNKLTLVIPDPETWVKCVEGVHVTYSTVVWNIDTVIDADGTELHPTSTGSGLTYCISGANIAWPLKVNLTRNGHNKVDVVLQNNELMPHGVKTKACVAGVDQAHCSVESKCYYTNISGNSVVAAITSSNPNLKVASFLNEAGNQIYVDLDPPCKFGMKVGVKVEVVYLYFIKNTRSIVRGMVLGAISNVVVLQSKGHETEEVDAVGILSLCSFAVDPADTYCKYVAAGNQPLGNCVKMLTVHNGSGFAITSKPSPTPDQDSYGGASVCLYCRAHIAHPGSVGNLDGRCQFKGSFVQIPTTEKDPVGFCLRNKVCTVCQCWIGYGCQCDSLRQPKSSVQSVAGASDFDKNYLNRVRGSSEARLIPLASGCDPDVVKRAFDVCNKESAGMFQNLKRNCARFQELRDTEDGNLEYLDSYFVVKQTTPSNYEHEKSCYEDLKSEVTADHDFFVFNKNIYNISRQRLTKYTMMDFCYALRHFDPKDCEVLKEILVTYGCIEDYHPKWFEENKDWYDPIENSKYYVMLAKMGPIVRRALLNAIEFGNLMVEKGYVGVITLDNQDLNGKFYDFGDFQKTAPGAGVPVFDTYYSYMMPIIAMTDALAPERYFEYDVHKGYKSYDLLKYDYTEEKQELFQKYFKYWDQEYHPNCRDCSDDRCLIHCANFNILFSTLIPQTSFGNLCRKVFVDGVPFIATCGYHSKELGVIMNQDNTMSFSKMGLSQLMQFVGDPALLVGTSNNLVDLRTSCFSVCALTSGITHQTVKPGHFNKDFYDFAEKAGMFKEGSSIPLKHFFYPQTGNAAINDYDYYRYNRPTMFDICQLLFCLEVTSKYFECYEGGCIPASQVVVNNLDKSAGYPFNKFGKARLYYEMSLEEQDQLFEITKKNVLPTITQMNLKYAISAKNRARTVAGVSILSTMTNRQFHQKILKSIVNTRNASVVIGTTKFYGGWDNMLRNLIQGVEDPILMGWDYPKCDRAMPNLLRIAASLVLARKHTNCCSWSERIYRLYNECAQVLSETVLATGGIYVKPGGTSSGDATTAYANSVFNIIQATSANVARLLSVITRDIVYDNIKSLQYELYQQVYRRVNFDPAFVEKFYSYLCKNFSLMILSDDGVVCYNNTLAKQGLVADISGFREVLYYQNNVFMADSKCWVEPDLEKGPHEFCSQHTMLVEVDGEPKYLPYPDPSRILGACVFVDDVDKTEPVAVMERYIALAIDAYPLVHHENEEYKKVFFVLLAYIRKLYQELSQNMLMDYSFVMDIDKGSKFWEQEFYENMYRAPTTLQSCGVCVVCNSQTILRCGNCIRKPFLCCKCCYDHVMHTDHKNVLSINPYICSQLGCGEADVTKLYLGGMSYFCGNHKPKLSIPLVSNGTVFGIYRANCAGSENVDDFNQLATTNWSIVEPYILANRCSDSLRRFAAETVKATEELHKQQFASAEVREVFSDRELILSWEPGKTRPPLNRNYVFTGYHFTRTSKVQLGDFTFEKGEGKDVVYYKATSTAKLSVGDIFVLTSHNVVSLVAPTLCPQQTFSRFVNLRPNVMVPECFVNNIPLYHLVGKQKRTTVQGPPGSGKSHFAIGLAVYFSSARVVFTACSHAAVDALCEKAFKFLKVDDCTRIVPQRTTVDCFSKFKANDTGKKYIFSTINALPEVSCDILLVDEVSMLTNYELSFINGKINYQYVVYVGDPAQLPAPRTLLNGSLSPKDYNVVTNLMVCVKPDIFLAKCYRCPKEIVDTVSTLVYDGKFIANNPESRECFKVIVNNGNSDVGHESGSAYNTTQLEFVKDFVCRNKQWREAIFISPYNAMNQRAYRMLGLNVQTVDSSQGSEYDYVIFCVTADSQHALNINRFNVALTRAKRGILVVMRQRDELYSALKFTELDSETSLQGTGLFKICNKEFSGVHPAYAVTTKALAATYKVNDELAALVNVEAGSEITYKHLISLLGFKMSVNVEGCHNMFITRDEAIRNVRGWVGFDVEATHACGTNIGTNLPFQVGFSTGADFVVTPEGLVDTSIGNNFEPVNSKAPPGEQFNHLRVLFKSAKPWHVIRPRIVQMLADNLCNVSDCVVFVTWCHGLELTTLRYFVKIGKEQVCSCGSRATTFNSHTQAYACWKHCLGFDFVYNPLLVDIQQWGYSGNLQFNHDLHCNVHGHAHVASVDAIMTRCLAINNAFCQDVNWDLTYPHIANEDEVNSSCRYLQRMYLNACVDALKVNVVYDIGNPKGIKCVRRGDVNFRFYDKNPIVRNVKQFEYDYNQHKDKFADGLCMFWNCNVDCYPDNSLVCRYDTRNLSVFNLPGCNGGSLYVNKHAFYTPKFDRISFRNLKAMPFFFYDSSPCETIQVDGVAQDLVSLATKDCITKCNIGGAVCKKHAQMYAEFVTSYNAAVTAGFTFWVTNKLNPYNLWKSFSALQSIDNIAYNMYKGGHYDAIAGEMPTVITGDKVFVIDQGVEKAVFVNQTTLPTSVAFELYAKRNIRTLPNNRILKGLGVDVTNGFVIWDYANQTPLYRNTVKVCAYTDIEPNGLVVLYDDRYGDYQSFLAADNAVLVSTQCYKRYSYVEIPSNLLVQNGMPLKDGANLYVYKRVNGAFVTLPNTINTQGRSYETFEPRSDIERDFLAMSEESFVERYGKDLGLQHILYGEVDKPQLGGLHTVIGMYRLLRANKLNAKSVTNSDSDVMQNYFVLSDNGSYKQVCTVVDLLLDDFLELLRNILKEYGTNKSKVVTVSIDYHSINFMTWFEDGSIKTCYPQLQSAWTCGYNMPELYKVQNCVMEPCNIPNYGVGITLPSGILMNVAKYTQLCQYLSKTTICVPHNMRVMHFGAGSDKGVAPGSTVLKQWLPEGTLLVDNDIVDYVSDAHVSVLSDCNKYNTEHKFDLVISDMYTDNDSKRKHEGVIANNGNDDVFIYLSSFLRNNLALGGSFAVKVTETSWHEVLYDIAQDCAWWTMFCTAVNASSSEAFLIGVNYLGASEKVKVSGKTLHANYIFWRNCNYLQTSAYSIFDVAKFDLRLKATPVVNLKTEQKTDLVFNLIKCGKLLVRDVGNTSFTSDSFVCTM</sequence>